<feature type="chain" id="PRO_0000211209" description="MYND-type zinc finger-containing chromatin reader ZMYND8">
    <location>
        <begin position="1"/>
        <end position="1186"/>
    </location>
</feature>
<feature type="domain" description="Bromo" evidence="1">
    <location>
        <begin position="145"/>
        <end position="252"/>
    </location>
</feature>
<feature type="domain" description="PWWP" evidence="4">
    <location>
        <begin position="277"/>
        <end position="327"/>
    </location>
</feature>
<feature type="zinc finger region" description="PHD-type" evidence="3">
    <location>
        <begin position="88"/>
        <end position="133"/>
    </location>
</feature>
<feature type="zinc finger region" description="MYND-type" evidence="2">
    <location>
        <begin position="1028"/>
        <end position="1062"/>
    </location>
</feature>
<feature type="region of interest" description="Required for interaction with CCNT1" evidence="13">
    <location>
        <begin position="1"/>
        <end position="850"/>
    </location>
</feature>
<feature type="region of interest" description="Disordered" evidence="5">
    <location>
        <begin position="1"/>
        <end position="57"/>
    </location>
</feature>
<feature type="region of interest" description="Interaction with histone H3K14ac" evidence="10">
    <location>
        <begin position="75"/>
        <end position="406"/>
    </location>
</feature>
<feature type="region of interest" description="Interaction with histone H3K4me0" evidence="10">
    <location>
        <begin position="75"/>
        <end position="268"/>
    </location>
</feature>
<feature type="region of interest" description="Required for interaction with histone H3 and histone H4" evidence="8">
    <location>
        <begin position="88"/>
        <end position="327"/>
    </location>
</feature>
<feature type="region of interest" description="Disordered" evidence="5">
    <location>
        <begin position="412"/>
        <end position="512"/>
    </location>
</feature>
<feature type="region of interest" description="Disordered" evidence="5">
    <location>
        <begin position="582"/>
        <end position="884"/>
    </location>
</feature>
<feature type="region of interest" description="Required for homodimerization" evidence="13">
    <location>
        <begin position="875"/>
        <end position="1047"/>
    </location>
</feature>
<feature type="region of interest" description="Required for recruitment to DNA damage sites and for interaction with the NuRD complex, CHD4, HDAC1, HDAC2 and KDM1A" evidence="8 11">
    <location>
        <begin position="1028"/>
        <end position="1062"/>
    </location>
</feature>
<feature type="region of interest" description="Disordered" evidence="5">
    <location>
        <begin position="1071"/>
        <end position="1186"/>
    </location>
</feature>
<feature type="region of interest" description="Interaction with PRKCB1">
    <location>
        <begin position="1147"/>
        <end position="1186"/>
    </location>
</feature>
<feature type="compositionally biased region" description="Basic and acidic residues" evidence="5">
    <location>
        <begin position="1"/>
        <end position="12"/>
    </location>
</feature>
<feature type="compositionally biased region" description="Polar residues" evidence="5">
    <location>
        <begin position="433"/>
        <end position="442"/>
    </location>
</feature>
<feature type="compositionally biased region" description="Polar residues" evidence="5">
    <location>
        <begin position="472"/>
        <end position="489"/>
    </location>
</feature>
<feature type="compositionally biased region" description="Basic and acidic residues" evidence="5">
    <location>
        <begin position="585"/>
        <end position="597"/>
    </location>
</feature>
<feature type="compositionally biased region" description="Basic and acidic residues" evidence="5">
    <location>
        <begin position="606"/>
        <end position="631"/>
    </location>
</feature>
<feature type="compositionally biased region" description="Basic and acidic residues" evidence="5">
    <location>
        <begin position="656"/>
        <end position="696"/>
    </location>
</feature>
<feature type="compositionally biased region" description="Basic and acidic residues" evidence="5">
    <location>
        <begin position="718"/>
        <end position="738"/>
    </location>
</feature>
<feature type="compositionally biased region" description="Low complexity" evidence="5">
    <location>
        <begin position="766"/>
        <end position="799"/>
    </location>
</feature>
<feature type="compositionally biased region" description="Polar residues" evidence="5">
    <location>
        <begin position="818"/>
        <end position="832"/>
    </location>
</feature>
<feature type="compositionally biased region" description="Low complexity" evidence="5">
    <location>
        <begin position="835"/>
        <end position="857"/>
    </location>
</feature>
<feature type="compositionally biased region" description="Polar residues" evidence="5">
    <location>
        <begin position="873"/>
        <end position="884"/>
    </location>
</feature>
<feature type="compositionally biased region" description="Low complexity" evidence="5">
    <location>
        <begin position="1085"/>
        <end position="1103"/>
    </location>
</feature>
<feature type="compositionally biased region" description="Basic and acidic residues" evidence="5">
    <location>
        <begin position="1104"/>
        <end position="1116"/>
    </location>
</feature>
<feature type="compositionally biased region" description="Polar residues" evidence="5">
    <location>
        <begin position="1121"/>
        <end position="1140"/>
    </location>
</feature>
<feature type="compositionally biased region" description="Basic and acidic residues" evidence="5">
    <location>
        <begin position="1154"/>
        <end position="1165"/>
    </location>
</feature>
<feature type="compositionally biased region" description="Basic and acidic residues" evidence="5">
    <location>
        <begin position="1175"/>
        <end position="1186"/>
    </location>
</feature>
<feature type="binding site" evidence="12 29">
    <location>
        <position position="91"/>
    </location>
    <ligand>
        <name>Zn(2+)</name>
        <dbReference type="ChEBI" id="CHEBI:29105"/>
        <label>1</label>
    </ligand>
</feature>
<feature type="binding site" evidence="12 29">
    <location>
        <position position="94"/>
    </location>
    <ligand>
        <name>Zn(2+)</name>
        <dbReference type="ChEBI" id="CHEBI:29105"/>
        <label>1</label>
    </ligand>
</feature>
<feature type="binding site" evidence="12 29">
    <location>
        <position position="103"/>
    </location>
    <ligand>
        <name>Zn(2+)</name>
        <dbReference type="ChEBI" id="CHEBI:29105"/>
        <label>2</label>
    </ligand>
</feature>
<feature type="binding site" evidence="12 29">
    <location>
        <position position="106"/>
    </location>
    <ligand>
        <name>Zn(2+)</name>
        <dbReference type="ChEBI" id="CHEBI:29105"/>
        <label>2</label>
    </ligand>
</feature>
<feature type="binding site" evidence="12 29">
    <location>
        <position position="111"/>
    </location>
    <ligand>
        <name>Zn(2+)</name>
        <dbReference type="ChEBI" id="CHEBI:29105"/>
        <label>1</label>
    </ligand>
</feature>
<feature type="binding site" evidence="12 29">
    <location>
        <position position="114"/>
    </location>
    <ligand>
        <name>Zn(2+)</name>
        <dbReference type="ChEBI" id="CHEBI:29105"/>
        <label>1</label>
    </ligand>
</feature>
<feature type="binding site" evidence="12 29">
    <location>
        <position position="127"/>
    </location>
    <ligand>
        <name>Zn(2+)</name>
        <dbReference type="ChEBI" id="CHEBI:29105"/>
        <label>2</label>
    </ligand>
</feature>
<feature type="binding site" evidence="12 29">
    <location>
        <position position="130"/>
    </location>
    <ligand>
        <name>Zn(2+)</name>
        <dbReference type="ChEBI" id="CHEBI:29105"/>
        <label>2</label>
    </ligand>
</feature>
<feature type="binding site" evidence="12 29">
    <location>
        <position position="255"/>
    </location>
    <ligand>
        <name>Zn(2+)</name>
        <dbReference type="ChEBI" id="CHEBI:29105"/>
        <label>3</label>
    </ligand>
</feature>
<feature type="binding site" evidence="12 29">
    <location>
        <position position="258"/>
    </location>
    <ligand>
        <name>Zn(2+)</name>
        <dbReference type="ChEBI" id="CHEBI:29105"/>
        <label>3</label>
    </ligand>
</feature>
<feature type="binding site" evidence="12 29">
    <location>
        <position position="274"/>
    </location>
    <ligand>
        <name>Zn(2+)</name>
        <dbReference type="ChEBI" id="CHEBI:29105"/>
        <label>3</label>
    </ligand>
</feature>
<feature type="binding site" evidence="2">
    <location>
        <position position="1028"/>
    </location>
    <ligand>
        <name>Zn(2+)</name>
        <dbReference type="ChEBI" id="CHEBI:29105"/>
        <label>3</label>
    </ligand>
</feature>
<feature type="binding site" evidence="2">
    <location>
        <position position="1031"/>
    </location>
    <ligand>
        <name>Zn(2+)</name>
        <dbReference type="ChEBI" id="CHEBI:29105"/>
        <label>3</label>
    </ligand>
</feature>
<feature type="binding site" evidence="2">
    <location>
        <position position="1039"/>
    </location>
    <ligand>
        <name>Zn(2+)</name>
        <dbReference type="ChEBI" id="CHEBI:29105"/>
        <label>4</label>
    </ligand>
</feature>
<feature type="binding site" evidence="2">
    <location>
        <position position="1040"/>
    </location>
    <ligand>
        <name>Zn(2+)</name>
        <dbReference type="ChEBI" id="CHEBI:29105"/>
        <label>4</label>
    </ligand>
</feature>
<feature type="binding site" evidence="2">
    <location>
        <position position="1046"/>
    </location>
    <ligand>
        <name>Zn(2+)</name>
        <dbReference type="ChEBI" id="CHEBI:29105"/>
        <label>3</label>
    </ligand>
</feature>
<feature type="binding site" evidence="2">
    <location>
        <position position="1050"/>
    </location>
    <ligand>
        <name>Zn(2+)</name>
        <dbReference type="ChEBI" id="CHEBI:29105"/>
        <label>3</label>
    </ligand>
</feature>
<feature type="binding site" evidence="2">
    <location>
        <position position="1058"/>
    </location>
    <ligand>
        <name>Zn(2+)</name>
        <dbReference type="ChEBI" id="CHEBI:29105"/>
        <label>4</label>
    </ligand>
</feature>
<feature type="binding site" evidence="2">
    <location>
        <position position="1062"/>
    </location>
    <ligand>
        <name>Zn(2+)</name>
        <dbReference type="ChEBI" id="CHEBI:29105"/>
        <label>4</label>
    </ligand>
</feature>
<feature type="modified residue" description="Phosphoserine" evidence="35">
    <location>
        <position position="24"/>
    </location>
</feature>
<feature type="modified residue" description="Phosphothreonine" evidence="33">
    <location>
        <position position="404"/>
    </location>
</feature>
<feature type="modified residue" description="Phosphoserine" evidence="30 32 33 35 36">
    <location>
        <position position="406"/>
    </location>
</feature>
<feature type="modified residue" description="N6-acetyllysine; alternate" evidence="31">
    <location>
        <position position="413"/>
    </location>
</feature>
<feature type="modified residue" description="Phosphoserine" evidence="35">
    <location>
        <position position="417"/>
    </location>
</feature>
<feature type="modified residue" description="Phosphoserine" evidence="34 35">
    <location>
        <position position="425"/>
    </location>
</feature>
<feature type="modified residue" description="Phosphoserine" evidence="34">
    <location>
        <position position="432"/>
    </location>
</feature>
<feature type="modified residue" description="Phosphoserine" evidence="34 35">
    <location>
        <position position="444"/>
    </location>
</feature>
<feature type="modified residue" description="Phosphoserine" evidence="35">
    <location>
        <position position="460"/>
    </location>
</feature>
<feature type="modified residue" description="Phosphoserine" evidence="30">
    <location>
        <position position="462"/>
    </location>
</feature>
<feature type="modified residue" description="Phosphoserine" evidence="30 35">
    <location>
        <position position="465"/>
    </location>
</feature>
<feature type="modified residue" description="Phosphoserine" evidence="30 32 33">
    <location>
        <position position="486"/>
    </location>
</feature>
<feature type="modified residue" description="Phosphoserine" evidence="30 32 34 36">
    <location>
        <position position="490"/>
    </location>
</feature>
<feature type="modified residue" description="Phosphoserine" evidence="30 32 33 35">
    <location>
        <position position="495"/>
    </location>
</feature>
<feature type="modified residue" description="Phosphoserine" evidence="35">
    <location>
        <position position="514"/>
    </location>
</feature>
<feature type="modified residue" description="Phosphoserine" evidence="35">
    <location>
        <position position="523"/>
    </location>
</feature>
<feature type="modified residue" description="Phosphothreonine" evidence="30">
    <location>
        <position position="541"/>
    </location>
</feature>
<feature type="modified residue" description="Phosphoserine" evidence="30 34 35 36">
    <location>
        <position position="547"/>
    </location>
</feature>
<feature type="modified residue" description="Phosphothreonine" evidence="35">
    <location>
        <position position="563"/>
    </location>
</feature>
<feature type="modified residue" description="Phosphoserine" evidence="35">
    <location>
        <position position="652"/>
    </location>
</feature>
<feature type="modified residue" description="Phosphoserine" evidence="35">
    <location>
        <position position="655"/>
    </location>
</feature>
<feature type="modified residue" description="Phosphoserine" evidence="33 35 36">
    <location>
        <position position="668"/>
    </location>
</feature>
<feature type="modified residue" description="Phosphoserine" evidence="34">
    <location>
        <position position="682"/>
    </location>
</feature>
<feature type="modified residue" description="Phosphoserine" evidence="36">
    <location>
        <position position="707"/>
    </location>
</feature>
<feature type="modified residue" description="Phosphoserine" evidence="36">
    <location>
        <position position="709"/>
    </location>
</feature>
<feature type="modified residue" description="Phosphoserine" evidence="35">
    <location>
        <position position="737"/>
    </location>
</feature>
<feature type="modified residue" description="Phosphothreonine" evidence="34">
    <location>
        <position position="746"/>
    </location>
</feature>
<feature type="modified residue" description="Phosphoserine" evidence="34">
    <location>
        <position position="754"/>
    </location>
</feature>
<feature type="modified residue" description="Phosphoserine" evidence="30 34 35">
    <location>
        <position position="756"/>
    </location>
</feature>
<feature type="modified residue" description="Phosphoserine" evidence="35">
    <location>
        <position position="1119"/>
    </location>
</feature>
<feature type="modified residue" description="Phosphoserine" evidence="35">
    <location>
        <position position="1141"/>
    </location>
</feature>
<feature type="cross-link" description="Glycyl lysine isopeptide (Lys-Gly) (interchain with G-Cter in SUMO2)" evidence="40">
    <location>
        <position position="56"/>
    </location>
</feature>
<feature type="cross-link" description="Glycyl lysine isopeptide (Lys-Gly) (interchain with G-Cter in SUMO2)" evidence="40">
    <location>
        <position position="70"/>
    </location>
</feature>
<feature type="cross-link" description="Glycyl lysine isopeptide (Lys-Gly) (interchain with G-Cter in SUMO2)" evidence="40">
    <location>
        <position position="390"/>
    </location>
</feature>
<feature type="cross-link" description="Glycyl lysine isopeptide (Lys-Gly) (interchain with G-Cter in SUMO2); alternate" evidence="40">
    <location>
        <position position="413"/>
    </location>
</feature>
<feature type="cross-link" description="Glycyl lysine isopeptide (Lys-Gly) (interchain with G-Cter in SUMO2)" evidence="40">
    <location>
        <position position="453"/>
    </location>
</feature>
<feature type="cross-link" description="Glycyl lysine isopeptide (Lys-Gly) (interchain with G-Cter in SUMO2)" evidence="40">
    <location>
        <position position="505"/>
    </location>
</feature>
<feature type="cross-link" description="Glycyl lysine isopeptide (Lys-Gly) (interchain with G-Cter in SUMO2)" evidence="40">
    <location>
        <position position="530"/>
    </location>
</feature>
<feature type="cross-link" description="Glycyl lysine isopeptide (Lys-Gly) (interchain with G-Cter in SUMO2)" evidence="40">
    <location>
        <position position="549"/>
    </location>
</feature>
<feature type="cross-link" description="Glycyl lysine isopeptide (Lys-Gly) (interchain with G-Cter in SUMO2)" evidence="37 38 39 40">
    <location>
        <position position="611"/>
    </location>
</feature>
<feature type="cross-link" description="Glycyl lysine isopeptide (Lys-Gly) (interchain with G-Cter in SUMO2)" evidence="37 38 40">
    <location>
        <position position="645"/>
    </location>
</feature>
<feature type="cross-link" description="Glycyl lysine isopeptide (Lys-Gly) (interchain with G-Cter in SUMO2)" evidence="40">
    <location>
        <position position="657"/>
    </location>
</feature>
<feature type="cross-link" description="Glycyl lysine isopeptide (Lys-Gly) (interchain with G-Cter in SUMO2)" evidence="40">
    <location>
        <position position="1115"/>
    </location>
</feature>
<feature type="splice variant" id="VSP_000566" description="In isoform 2." evidence="19">
    <location>
        <begin position="1"/>
        <end position="526"/>
    </location>
</feature>
<feature type="splice variant" id="VSP_000565" description="In isoform 4." evidence="20">
    <location>
        <begin position="1"/>
        <end position="376"/>
    </location>
</feature>
<feature type="splice variant" id="VSP_000564" description="In isoform 3 and isoform 6." evidence="20 22">
    <location>
        <begin position="1"/>
        <end position="145"/>
    </location>
</feature>
<feature type="splice variant" id="VSP_054810" description="In isoform 19." evidence="21">
    <original>M</original>
    <variation>MVFLEEFEARSCLAEEEIKTEQEVVEGM</variation>
    <location>
        <position position="1"/>
    </location>
</feature>
<feature type="splice variant" id="VSP_054811" description="In isoform 20." evidence="21">
    <original>M</original>
    <variation>MFSSLQKSFNLAEEEIKTEQEVVEGM</variation>
    <location>
        <position position="1"/>
    </location>
</feature>
<feature type="splice variant" id="VSP_000563" description="In isoform 5, isoform 7, isoform 8, isoform 10, isoform 12, isoform 13, isoform 14, isoform 15, isoform 16, isoform 17, isoform 18 and isoform 22." evidence="22 26 27">
    <original>M</original>
    <variation>MHPQSLAEEEIKTEQEVVEGM</variation>
    <location>
        <position position="1"/>
    </location>
</feature>
<feature type="splice variant" id="VSP_000567" description="In isoform 5, isoform 14, isoform 15, isoform 16, isoform 17, isoform 18, isoform 20, isoform 21 and isoform 23." evidence="21 22 27">
    <location>
        <begin position="58"/>
        <end position="82"/>
    </location>
</feature>
<feature type="splice variant" id="VSP_054812" description="In isoform 23." evidence="21">
    <location>
        <begin position="132"/>
        <end position="169"/>
    </location>
</feature>
<feature type="splice variant" id="VSP_053400" description="In isoform 15 and isoform 18." evidence="27">
    <location>
        <begin position="474"/>
        <end position="520"/>
    </location>
</feature>
<feature type="splice variant" id="VSP_017096" description="In isoform 8 and isoform 17." evidence="22 26">
    <location>
        <begin position="742"/>
        <end position="868"/>
    </location>
</feature>
<feature type="splice variant" id="VSP_000568" description="In isoform 2, isoform 3, isoform 4, isoform 6, isoform 9, isoform 12, isoform 13, isoform 14, isoform 15, isoform 16, isoform 21, isoform 22 and isoform 23." evidence="19 20 21 22 23 27">
    <original>SKFQTSSQKWHMQKMQRQQQQQQQQNQQQQPQSSQGTRYQTRQAVKA</original>
    <variation>T</variation>
    <location>
        <begin position="823"/>
        <end position="869"/>
    </location>
</feature>
<feature type="splice variant" id="VSP_054814" description="In isoform 22." evidence="28">
    <location>
        <begin position="933"/>
        <end position="959"/>
    </location>
</feature>
<feature type="splice variant" id="VSP_000570" description="In isoform 6, isoform 7, isoform 8, isoform 9, isoform 11, isoform 13, isoform 16, isoform 19, isoform 22 and isoform 23." evidence="21 22 23 26 27">
    <original>D</original>
    <variation>VSKRCDKQPAYAPTTTDHQPHPNYPAQKY</variation>
    <location>
        <position position="1142"/>
    </location>
</feature>
<feature type="sequence variant" id="VAR_087647" description="Found in a patient with syndromic intellectual disability; uncertain significance; does not affect interaction with DBN1." evidence="16">
    <original>G</original>
    <variation>E</variation>
    <location>
        <position position="230"/>
    </location>
</feature>
<feature type="sequence variant" id="VAR_087648" description="Found in a patient with syndromic intellectual disability; uncertain significance; disrupts interaction with DBN1." evidence="16">
    <original>W</original>
    <variation>R</variation>
    <location>
        <position position="291"/>
    </location>
</feature>
<feature type="sequence variant" id="VAR_087649" description="Found in a patient with syndromic intellectual disability; uncertain significance; disrupts interaction with DBN1." evidence="16">
    <original>F</original>
    <variation>L</variation>
    <location>
        <position position="307"/>
    </location>
</feature>
<feature type="sequence variant" id="VAR_087650" description="Found in a patient with syndromic intellectual disability; uncertain significance; does not affect interaction with DBN1." evidence="16">
    <original>K</original>
    <variation>E</variation>
    <location>
        <position position="334"/>
    </location>
</feature>
<feature type="sequence variant" id="VAR_055559" description="In dbSNP:rs2275801." evidence="18">
    <original>V</original>
    <variation>A</variation>
    <location>
        <position position="752"/>
    </location>
</feature>
<feature type="sequence variant" id="VAR_087651" description="Found in a patient with syndromic intellectual disability; uncertain significance." evidence="16">
    <original>E</original>
    <variation>K</variation>
    <location>
        <position position="980"/>
    </location>
</feature>
<feature type="sequence variant" id="VAR_087652" description="Found in a patient with syndromic intellectual disability; uncertain significance; disrupts interaction with GATAD2A." evidence="16">
    <original>C</original>
    <variation>S</variation>
    <location>
        <position position="1039"/>
    </location>
</feature>
<feature type="sequence variant" id="VAR_087653" description="Found in a patient with syndromic intellectual disability; uncertain significance; does not affect interaction with GATAD2A." evidence="16">
    <original>H</original>
    <variation>R</variation>
    <location>
        <position position="1054"/>
    </location>
</feature>
<feature type="sequence variant" id="VAR_087654" description="Found in two patients with syndromic intellectual disability; uncertain significance; disrupts interaction with GATAD2A." evidence="16">
    <original>W</original>
    <variation>R</variation>
    <location>
        <position position="1055"/>
    </location>
</feature>
<feature type="mutagenesis site" description="Decreases interaction with histone H3K4me0." evidence="10">
    <original>D</original>
    <variation>A</variation>
    <location>
        <position position="76"/>
    </location>
</feature>
<feature type="mutagenesis site" description="Decreases interaction with histone H3K4me0." evidence="10">
    <original>D</original>
    <variation>A</variation>
    <location>
        <position position="79"/>
    </location>
</feature>
<feature type="mutagenesis site" description="Decreases interaction with histone H3K4me0." evidence="10">
    <original>D</original>
    <variation>A</variation>
    <location>
        <position position="84"/>
    </location>
</feature>
<feature type="mutagenesis site" description="Decreases interaction with histone H3K4me0." evidence="10">
    <original>D</original>
    <variation>A</variation>
    <location>
        <position position="88"/>
    </location>
</feature>
<feature type="mutagenesis site" description="Increases interaction with histone H3K4me0." evidence="10">
    <original>F</original>
    <variation>D</variation>
    <location>
        <position position="89"/>
    </location>
</feature>
<feature type="mutagenesis site" description="Decreases interaction with histone H3K4me0." evidence="10">
    <original>E</original>
    <variation>A</variation>
    <location>
        <position position="104"/>
    </location>
</feature>
<feature type="mutagenesis site" description="Decreases interaction with histone H3K4me0 and histone H4K16ac." evidence="9 10">
    <original>YN</original>
    <variation>AA</variation>
    <location>
        <begin position="227"/>
        <end position="228"/>
    </location>
</feature>
<feature type="mutagenesis site" description="Decreases interaction with histone H4ac." evidence="8">
    <original>N</original>
    <variation>A</variation>
    <location>
        <position position="228"/>
    </location>
</feature>
<feature type="mutagenesis site" description="Decreases binding to DBN1." evidence="12">
    <original>V</original>
    <variation>Q</variation>
    <location>
        <position position="240"/>
    </location>
</feature>
<feature type="mutagenesis site" description="Severely decreases interaction with histone H3.1K36me2." evidence="9">
    <original>F</original>
    <variation>A</variation>
    <location>
        <position position="307"/>
    </location>
</feature>
<feature type="mutagenesis site" description="Loss of binding to DBN1. Loss of cytoplasmic localization." evidence="12">
    <original>H</original>
    <variation>A</variation>
    <location>
        <position position="311"/>
    </location>
</feature>
<feature type="mutagenesis site" description="Loss of binding to DBN1." evidence="12">
    <original>D</original>
    <variation>R</variation>
    <location>
        <position position="312"/>
    </location>
</feature>
<feature type="sequence conflict" description="In Ref. 6; BAH11794." evidence="28" ref="6">
    <original>S</original>
    <variation>P</variation>
    <location>
        <position position="119"/>
    </location>
</feature>
<feature type="sequence conflict" description="In Ref. 6; BAH12176." evidence="28" ref="6">
    <original>A</original>
    <variation>T</variation>
    <location>
        <position position="202"/>
    </location>
</feature>
<feature type="sequence conflict" description="In Ref. 6; BAH12176." evidence="28" ref="6">
    <original>S</original>
    <variation>F</variation>
    <location>
        <position position="325"/>
    </location>
</feature>
<feature type="sequence conflict" description="In Ref. 2; AAL50790." evidence="28" ref="2">
    <original>I</original>
    <variation>V</variation>
    <location>
        <position position="391"/>
    </location>
</feature>
<feature type="sequence conflict" description="In Ref. 6; BAH11794." evidence="28" ref="6">
    <original>L</original>
    <variation>P</variation>
    <location>
        <position position="399"/>
    </location>
</feature>
<feature type="sequence conflict" description="In Ref. 6; BAH11794." evidence="28" ref="6">
    <original>D</original>
    <variation>G</variation>
    <location>
        <position position="470"/>
    </location>
</feature>
<feature type="sequence conflict" description="In Ref. 6; BAG53824." evidence="28" ref="6">
    <original>E</original>
    <variation>G</variation>
    <location>
        <position position="874"/>
    </location>
</feature>
<feature type="sequence conflict" description="In Ref. 2; AAG34905/AAL50790." evidence="28" ref="2">
    <original>P</original>
    <variation>A</variation>
    <location>
        <position position="894"/>
    </location>
</feature>
<feature type="sequence conflict" description="In Ref. 7; CAE46008." evidence="28" ref="7">
    <original>I</original>
    <variation>T</variation>
    <location>
        <position position="967"/>
    </location>
</feature>
<feature type="strand" evidence="41">
    <location>
        <begin position="89"/>
        <end position="91"/>
    </location>
</feature>
<feature type="turn" evidence="41">
    <location>
        <begin position="92"/>
        <end position="94"/>
    </location>
</feature>
<feature type="strand" evidence="44">
    <location>
        <begin position="98"/>
        <end position="101"/>
    </location>
</feature>
<feature type="strand" evidence="41">
    <location>
        <begin position="104"/>
        <end position="107"/>
    </location>
</feature>
<feature type="helix" evidence="41">
    <location>
        <begin position="112"/>
        <end position="115"/>
    </location>
</feature>
<feature type="strand" evidence="44">
    <location>
        <begin position="123"/>
        <end position="125"/>
    </location>
</feature>
<feature type="helix" evidence="41">
    <location>
        <begin position="128"/>
        <end position="137"/>
    </location>
</feature>
<feature type="helix" evidence="41">
    <location>
        <begin position="139"/>
        <end position="141"/>
    </location>
</feature>
<feature type="helix" evidence="41">
    <location>
        <begin position="144"/>
        <end position="147"/>
    </location>
</feature>
<feature type="helix" evidence="41">
    <location>
        <begin position="151"/>
        <end position="165"/>
    </location>
</feature>
<feature type="helix" evidence="41">
    <location>
        <begin position="171"/>
        <end position="173"/>
    </location>
</feature>
<feature type="turn" evidence="41">
    <location>
        <begin position="179"/>
        <end position="181"/>
    </location>
</feature>
<feature type="helix" evidence="41">
    <location>
        <begin position="185"/>
        <end position="188"/>
    </location>
</feature>
<feature type="helix" evidence="41">
    <location>
        <begin position="195"/>
        <end position="203"/>
    </location>
</feature>
<feature type="helix" evidence="41">
    <location>
        <begin position="210"/>
        <end position="228"/>
    </location>
</feature>
<feature type="helix" evidence="41">
    <location>
        <begin position="233"/>
        <end position="254"/>
    </location>
</feature>
<feature type="helix" evidence="41">
    <location>
        <begin position="256"/>
        <end position="264"/>
    </location>
</feature>
<feature type="helix" evidence="41">
    <location>
        <begin position="269"/>
        <end position="271"/>
    </location>
</feature>
<feature type="strand" evidence="41">
    <location>
        <begin position="280"/>
        <end position="283"/>
    </location>
</feature>
<feature type="strand" evidence="41">
    <location>
        <begin position="291"/>
        <end position="299"/>
    </location>
</feature>
<feature type="strand" evidence="41">
    <location>
        <begin position="302"/>
        <end position="307"/>
    </location>
</feature>
<feature type="turn" evidence="41">
    <location>
        <begin position="308"/>
        <end position="310"/>
    </location>
</feature>
<feature type="strand" evidence="41">
    <location>
        <begin position="313"/>
        <end position="317"/>
    </location>
</feature>
<feature type="helix" evidence="41">
    <location>
        <begin position="318"/>
        <end position="320"/>
    </location>
</feature>
<feature type="strand" evidence="41">
    <location>
        <begin position="321"/>
        <end position="323"/>
    </location>
</feature>
<feature type="strand" evidence="43">
    <location>
        <begin position="325"/>
        <end position="327"/>
    </location>
</feature>
<feature type="helix" evidence="41">
    <location>
        <begin position="336"/>
        <end position="357"/>
    </location>
</feature>
<feature type="helix" evidence="41">
    <location>
        <begin position="375"/>
        <end position="377"/>
    </location>
</feature>
<feature type="helix" evidence="41">
    <location>
        <begin position="384"/>
        <end position="386"/>
    </location>
</feature>
<feature type="helix" evidence="42">
    <location>
        <begin position="953"/>
        <end position="972"/>
    </location>
</feature>
<feature type="helix" evidence="42">
    <location>
        <begin position="975"/>
        <end position="1023"/>
    </location>
</feature>
<feature type="turn" evidence="42">
    <location>
        <begin position="1029"/>
        <end position="1031"/>
    </location>
</feature>
<feature type="strand" evidence="42">
    <location>
        <begin position="1037"/>
        <end position="1040"/>
    </location>
</feature>
<feature type="strand" evidence="42">
    <location>
        <begin position="1043"/>
        <end position="1047"/>
    </location>
</feature>
<feature type="helix" evidence="42">
    <location>
        <begin position="1048"/>
        <end position="1058"/>
    </location>
</feature>
<feature type="helix" evidence="42">
    <location>
        <begin position="1059"/>
        <end position="1061"/>
    </location>
</feature>
<feature type="sequence conflict" description="In Ref. 1; AAF71262." evidence="28" ref="1">
    <original>T</original>
    <variation>S</variation>
    <location sequence="Q9ULU4-2">
        <position position="297"/>
    </location>
</feature>
<feature type="cross-link" description="Glycyl lysine isopeptide (Lys-Gly) (interchain with G-Cter in SUMO2)" evidence="37 38 40">
    <location sequence="Q9ULU4-5">
        <position position="12"/>
    </location>
</feature>
<feature type="cross-link" description="Glycyl lysine isopeptide (Lys-Gly) (interchain with G-Cter in SUMO2)" evidence="37 38 40">
    <location sequence="Q9ULU4-7">
        <position position="12"/>
    </location>
</feature>
<feature type="cross-link" description="Glycyl lysine isopeptide (Lys-Gly) (interchain with G-Cter in SUMO2)" evidence="37 38 40">
    <location sequence="Q9ULU4-8">
        <position position="12"/>
    </location>
</feature>
<feature type="cross-link" description="Glycyl lysine isopeptide (Lys-Gly) (interchain with G-Cter in SUMO2)" evidence="37 38 40">
    <location sequence="Q9ULU4-10">
        <position position="12"/>
    </location>
</feature>
<feature type="cross-link" description="Glycyl lysine isopeptide (Lys-Gly) (interchain with G-Cter in SUMO2)" evidence="37 38 40">
    <location sequence="Q9ULU4-12">
        <position position="12"/>
    </location>
</feature>
<feature type="cross-link" description="Glycyl lysine isopeptide (Lys-Gly) (interchain with G-Cter in SUMO2)" evidence="37 38 40">
    <location sequence="Q9ULU4-13">
        <position position="12"/>
    </location>
</feature>
<feature type="cross-link" description="Glycyl lysine isopeptide (Lys-Gly) (interchain with G-Cter in SUMO2)" evidence="37 38 40">
    <location sequence="Q9ULU4-14">
        <position position="12"/>
    </location>
</feature>
<feature type="cross-link" description="Glycyl lysine isopeptide (Lys-Gly) (interchain with G-Cter in SUMO2)" evidence="37 38 40">
    <location sequence="Q9ULU4-15">
        <position position="12"/>
    </location>
</feature>
<feature type="cross-link" description="Glycyl lysine isopeptide (Lys-Gly) (interchain with G-Cter in SUMO2)" evidence="37 38 40">
    <location sequence="Q9ULU4-16">
        <position position="12"/>
    </location>
</feature>
<feature type="cross-link" description="Glycyl lysine isopeptide (Lys-Gly) (interchain with G-Cter in SUMO2)" evidence="37 38 40">
    <location sequence="Q9ULU4-17">
        <position position="12"/>
    </location>
</feature>
<feature type="cross-link" description="Glycyl lysine isopeptide (Lys-Gly) (interchain with G-Cter in SUMO2)" evidence="37 38 40">
    <location sequence="Q9ULU4-18">
        <position position="12"/>
    </location>
</feature>
<feature type="cross-link" description="Glycyl lysine isopeptide (Lys-Gly) (interchain with G-Cter in SUMO2)" evidence="37 38 40">
    <location sequence="Q9ULU4-22">
        <position position="12"/>
    </location>
</feature>
<evidence type="ECO:0000255" key="1">
    <source>
        <dbReference type="PROSITE-ProRule" id="PRU00035"/>
    </source>
</evidence>
<evidence type="ECO:0000255" key="2">
    <source>
        <dbReference type="PROSITE-ProRule" id="PRU00134"/>
    </source>
</evidence>
<evidence type="ECO:0000255" key="3">
    <source>
        <dbReference type="PROSITE-ProRule" id="PRU00146"/>
    </source>
</evidence>
<evidence type="ECO:0000255" key="4">
    <source>
        <dbReference type="PROSITE-ProRule" id="PRU00162"/>
    </source>
</evidence>
<evidence type="ECO:0000256" key="5">
    <source>
        <dbReference type="SAM" id="MobiDB-lite"/>
    </source>
</evidence>
<evidence type="ECO:0000269" key="6">
    <source>
    </source>
</evidence>
<evidence type="ECO:0000269" key="7">
    <source>
    </source>
</evidence>
<evidence type="ECO:0000269" key="8">
    <source>
    </source>
</evidence>
<evidence type="ECO:0000269" key="9">
    <source>
    </source>
</evidence>
<evidence type="ECO:0000269" key="10">
    <source>
    </source>
</evidence>
<evidence type="ECO:0000269" key="11">
    <source>
    </source>
</evidence>
<evidence type="ECO:0000269" key="12">
    <source>
    </source>
</evidence>
<evidence type="ECO:0000269" key="13">
    <source>
    </source>
</evidence>
<evidence type="ECO:0000269" key="14">
    <source>
    </source>
</evidence>
<evidence type="ECO:0000269" key="15">
    <source>
    </source>
</evidence>
<evidence type="ECO:0000269" key="16">
    <source>
    </source>
</evidence>
<evidence type="ECO:0000269" key="17">
    <source>
    </source>
</evidence>
<evidence type="ECO:0000269" key="18">
    <source ref="3"/>
</evidence>
<evidence type="ECO:0000303" key="19">
    <source>
    </source>
</evidence>
<evidence type="ECO:0000303" key="20">
    <source>
    </source>
</evidence>
<evidence type="ECO:0000303" key="21">
    <source>
    </source>
</evidence>
<evidence type="ECO:0000303" key="22">
    <source>
    </source>
</evidence>
<evidence type="ECO:0000303" key="23">
    <source>
    </source>
</evidence>
<evidence type="ECO:0000303" key="24">
    <source>
    </source>
</evidence>
<evidence type="ECO:0000303" key="25">
    <source>
    </source>
</evidence>
<evidence type="ECO:0000303" key="26">
    <source ref="3"/>
</evidence>
<evidence type="ECO:0000303" key="27">
    <source ref="4"/>
</evidence>
<evidence type="ECO:0000305" key="28"/>
<evidence type="ECO:0007744" key="29">
    <source>
        <dbReference type="PDB" id="5Y1Z"/>
    </source>
</evidence>
<evidence type="ECO:0007744" key="30">
    <source>
    </source>
</evidence>
<evidence type="ECO:0007744" key="31">
    <source>
    </source>
</evidence>
<evidence type="ECO:0007744" key="32">
    <source>
    </source>
</evidence>
<evidence type="ECO:0007744" key="33">
    <source>
    </source>
</evidence>
<evidence type="ECO:0007744" key="34">
    <source>
    </source>
</evidence>
<evidence type="ECO:0007744" key="35">
    <source>
    </source>
</evidence>
<evidence type="ECO:0007744" key="36">
    <source>
    </source>
</evidence>
<evidence type="ECO:0007744" key="37">
    <source>
    </source>
</evidence>
<evidence type="ECO:0007744" key="38">
    <source>
    </source>
</evidence>
<evidence type="ECO:0007744" key="39">
    <source>
    </source>
</evidence>
<evidence type="ECO:0007744" key="40">
    <source>
    </source>
</evidence>
<evidence type="ECO:0007829" key="41">
    <source>
        <dbReference type="PDB" id="4COS"/>
    </source>
</evidence>
<evidence type="ECO:0007829" key="42">
    <source>
        <dbReference type="PDB" id="5MQ4"/>
    </source>
</evidence>
<evidence type="ECO:0007829" key="43">
    <source>
        <dbReference type="PDB" id="5Y1Z"/>
    </source>
</evidence>
<evidence type="ECO:0007829" key="44">
    <source>
        <dbReference type="PDB" id="7CWH"/>
    </source>
</evidence>
<reference key="1">
    <citation type="journal article" date="2000" name="Mamm. Genome">
        <title>Identification and characterization of PRKCBP1, a candidate RACK-like protein.</title>
        <authorList>
            <person name="Fossey S.C."/>
            <person name="Kuroda S."/>
            <person name="Price J.A."/>
            <person name="Pendleton J.K."/>
            <person name="Freedman B.I."/>
            <person name="Bowden D.W."/>
        </authorList>
    </citation>
    <scope>NUCLEOTIDE SEQUENCE [MRNA] (ISOFORM 2)</scope>
    <scope>INTERACTION WITH PRKCB1</scope>
    <scope>TISSUE SPECIFICITY</scope>
    <source>
        <tissue>Hippocampus</tissue>
    </source>
</reference>
<reference key="2">
    <citation type="journal article" date="2001" name="Proc. Natl. Acad. Sci. U.S.A.">
        <title>Serological detection of cutaneous T-cell lymphoma-associated antigens.</title>
        <authorList>
            <person name="Eichmueller S."/>
            <person name="Usener D."/>
            <person name="Dummer R."/>
            <person name="Stein A."/>
            <person name="Thiel D."/>
            <person name="Schadendorf D."/>
        </authorList>
    </citation>
    <scope>NUCLEOTIDE SEQUENCE [MRNA] (ISOFORMS 3 AND 4)</scope>
    <scope>TISSUE SPECIFICITY</scope>
    <source>
        <tissue>Testis</tissue>
    </source>
</reference>
<reference key="3">
    <citation type="submission" date="2005-06" db="EMBL/GenBank/DDBJ databases">
        <title>Characterization of a novel BS69-related transcriptional repressor, BSR.</title>
        <authorList>
            <person name="Mikhailik A."/>
            <person name="Keller J."/>
            <person name="Yang J."/>
            <person name="Hearing P."/>
            <person name="Bar-Sagi D."/>
        </authorList>
    </citation>
    <scope>NUCLEOTIDE SEQUENCE [MRNA] (ISOFORMS 7 AND 8)</scope>
    <scope>VARIANT ALA-752</scope>
    <source>
        <tissue>Mammary tumor</tissue>
    </source>
</reference>
<reference key="4">
    <citation type="submission" date="2006-01" db="EMBL/GenBank/DDBJ databases">
        <title>Characterization of RACK7, a novel heterochromatin and mitotic chromosome associated protein.</title>
        <authorList>
            <person name="Grkovic S."/>
            <person name="Velasco G."/>
            <person name="Ansieau S."/>
        </authorList>
    </citation>
    <scope>NUCLEOTIDE SEQUENCE [MRNA] (ISOFORMS 5; 7; 10; 12; 13; 14; 15; 16 AND 18)</scope>
</reference>
<reference key="5">
    <citation type="journal article" date="1999" name="DNA Res.">
        <title>Characterization of cDNA clones selected by the GeneMark analysis from size-fractionated cDNA libraries from human brain.</title>
        <authorList>
            <person name="Hirosawa M."/>
            <person name="Nagase T."/>
            <person name="Ishikawa K."/>
            <person name="Kikuno R."/>
            <person name="Nomura N."/>
            <person name="Ohara O."/>
        </authorList>
    </citation>
    <scope>NUCLEOTIDE SEQUENCE [LARGE SCALE MRNA] (ISOFORM 1)</scope>
    <source>
        <tissue>Brain</tissue>
    </source>
</reference>
<reference key="6">
    <citation type="journal article" date="2004" name="Nat. Genet.">
        <title>Complete sequencing and characterization of 21,243 full-length human cDNAs.</title>
        <authorList>
            <person name="Ota T."/>
            <person name="Suzuki Y."/>
            <person name="Nishikawa T."/>
            <person name="Otsuki T."/>
            <person name="Sugiyama T."/>
            <person name="Irie R."/>
            <person name="Wakamatsu A."/>
            <person name="Hayashi K."/>
            <person name="Sato H."/>
            <person name="Nagai K."/>
            <person name="Kimura K."/>
            <person name="Makita H."/>
            <person name="Sekine M."/>
            <person name="Obayashi M."/>
            <person name="Nishi T."/>
            <person name="Shibahara T."/>
            <person name="Tanaka T."/>
            <person name="Ishii S."/>
            <person name="Yamamoto J."/>
            <person name="Saito K."/>
            <person name="Kawai Y."/>
            <person name="Isono Y."/>
            <person name="Nakamura Y."/>
            <person name="Nagahari K."/>
            <person name="Murakami K."/>
            <person name="Yasuda T."/>
            <person name="Iwayanagi T."/>
            <person name="Wagatsuma M."/>
            <person name="Shiratori A."/>
            <person name="Sudo H."/>
            <person name="Hosoiri T."/>
            <person name="Kaku Y."/>
            <person name="Kodaira H."/>
            <person name="Kondo H."/>
            <person name="Sugawara M."/>
            <person name="Takahashi M."/>
            <person name="Kanda K."/>
            <person name="Yokoi T."/>
            <person name="Furuya T."/>
            <person name="Kikkawa E."/>
            <person name="Omura Y."/>
            <person name="Abe K."/>
            <person name="Kamihara K."/>
            <person name="Katsuta N."/>
            <person name="Sato K."/>
            <person name="Tanikawa M."/>
            <person name="Yamazaki M."/>
            <person name="Ninomiya K."/>
            <person name="Ishibashi T."/>
            <person name="Yamashita H."/>
            <person name="Murakawa K."/>
            <person name="Fujimori K."/>
            <person name="Tanai H."/>
            <person name="Kimata M."/>
            <person name="Watanabe M."/>
            <person name="Hiraoka S."/>
            <person name="Chiba Y."/>
            <person name="Ishida S."/>
            <person name="Ono Y."/>
            <person name="Takiguchi S."/>
            <person name="Watanabe S."/>
            <person name="Yosida M."/>
            <person name="Hotuta T."/>
            <person name="Kusano J."/>
            <person name="Kanehori K."/>
            <person name="Takahashi-Fujii A."/>
            <person name="Hara H."/>
            <person name="Tanase T.-O."/>
            <person name="Nomura Y."/>
            <person name="Togiya S."/>
            <person name="Komai F."/>
            <person name="Hara R."/>
            <person name="Takeuchi K."/>
            <person name="Arita M."/>
            <person name="Imose N."/>
            <person name="Musashino K."/>
            <person name="Yuuki H."/>
            <person name="Oshima A."/>
            <person name="Sasaki N."/>
            <person name="Aotsuka S."/>
            <person name="Yoshikawa Y."/>
            <person name="Matsunawa H."/>
            <person name="Ichihara T."/>
            <person name="Shiohata N."/>
            <person name="Sano S."/>
            <person name="Moriya S."/>
            <person name="Momiyama H."/>
            <person name="Satoh N."/>
            <person name="Takami S."/>
            <person name="Terashima Y."/>
            <person name="Suzuki O."/>
            <person name="Nakagawa S."/>
            <person name="Senoh A."/>
            <person name="Mizoguchi H."/>
            <person name="Goto Y."/>
            <person name="Shimizu F."/>
            <person name="Wakebe H."/>
            <person name="Hishigaki H."/>
            <person name="Watanabe T."/>
            <person name="Sugiyama A."/>
            <person name="Takemoto M."/>
            <person name="Kawakami B."/>
            <person name="Yamazaki M."/>
            <person name="Watanabe K."/>
            <person name="Kumagai A."/>
            <person name="Itakura S."/>
            <person name="Fukuzumi Y."/>
            <person name="Fujimori Y."/>
            <person name="Komiyama M."/>
            <person name="Tashiro H."/>
            <person name="Tanigami A."/>
            <person name="Fujiwara T."/>
            <person name="Ono T."/>
            <person name="Yamada K."/>
            <person name="Fujii Y."/>
            <person name="Ozaki K."/>
            <person name="Hirao M."/>
            <person name="Ohmori Y."/>
            <person name="Kawabata A."/>
            <person name="Hikiji T."/>
            <person name="Kobatake N."/>
            <person name="Inagaki H."/>
            <person name="Ikema Y."/>
            <person name="Okamoto S."/>
            <person name="Okitani R."/>
            <person name="Kawakami T."/>
            <person name="Noguchi S."/>
            <person name="Itoh T."/>
            <person name="Shigeta K."/>
            <person name="Senba T."/>
            <person name="Matsumura K."/>
            <person name="Nakajima Y."/>
            <person name="Mizuno T."/>
            <person name="Morinaga M."/>
            <person name="Sasaki M."/>
            <person name="Togashi T."/>
            <person name="Oyama M."/>
            <person name="Hata H."/>
            <person name="Watanabe M."/>
            <person name="Komatsu T."/>
            <person name="Mizushima-Sugano J."/>
            <person name="Satoh T."/>
            <person name="Shirai Y."/>
            <person name="Takahashi Y."/>
            <person name="Nakagawa K."/>
            <person name="Okumura K."/>
            <person name="Nagase T."/>
            <person name="Nomura N."/>
            <person name="Kikuchi H."/>
            <person name="Masuho Y."/>
            <person name="Yamashita R."/>
            <person name="Nakai K."/>
            <person name="Yada T."/>
            <person name="Nakamura Y."/>
            <person name="Ohara O."/>
            <person name="Isogai T."/>
            <person name="Sugano S."/>
        </authorList>
    </citation>
    <scope>NUCLEOTIDE SEQUENCE [LARGE SCALE MRNA] (ISOFORMS 11; 19; 20 AND 23)</scope>
    <source>
        <tissue>Amygdala</tissue>
        <tissue>Brain</tissue>
        <tissue>Hippocampus</tissue>
        <tissue>Trachea</tissue>
    </source>
</reference>
<reference key="7">
    <citation type="journal article" date="2007" name="BMC Genomics">
        <title>The full-ORF clone resource of the German cDNA consortium.</title>
        <authorList>
            <person name="Bechtel S."/>
            <person name="Rosenfelder H."/>
            <person name="Duda A."/>
            <person name="Schmidt C.P."/>
            <person name="Ernst U."/>
            <person name="Wellenreuther R."/>
            <person name="Mehrle A."/>
            <person name="Schuster C."/>
            <person name="Bahr A."/>
            <person name="Bloecker H."/>
            <person name="Heubner D."/>
            <person name="Hoerlein A."/>
            <person name="Michel G."/>
            <person name="Wedler H."/>
            <person name="Koehrer K."/>
            <person name="Ottenwaelder B."/>
            <person name="Poustka A."/>
            <person name="Wiemann S."/>
            <person name="Schupp I."/>
        </authorList>
    </citation>
    <scope>NUCLEOTIDE SEQUENCE [LARGE SCALE MRNA] (ISOFORM 9)</scope>
    <source>
        <tissue>Salivary gland</tissue>
    </source>
</reference>
<reference key="8">
    <citation type="journal article" date="2001" name="Nature">
        <title>The DNA sequence and comparative analysis of human chromosome 20.</title>
        <authorList>
            <person name="Deloukas P."/>
            <person name="Matthews L.H."/>
            <person name="Ashurst J.L."/>
            <person name="Burton J."/>
            <person name="Gilbert J.G.R."/>
            <person name="Jones M."/>
            <person name="Stavrides G."/>
            <person name="Almeida J.P."/>
            <person name="Babbage A.K."/>
            <person name="Bagguley C.L."/>
            <person name="Bailey J."/>
            <person name="Barlow K.F."/>
            <person name="Bates K.N."/>
            <person name="Beard L.M."/>
            <person name="Beare D.M."/>
            <person name="Beasley O.P."/>
            <person name="Bird C.P."/>
            <person name="Blakey S.E."/>
            <person name="Bridgeman A.M."/>
            <person name="Brown A.J."/>
            <person name="Buck D."/>
            <person name="Burrill W.D."/>
            <person name="Butler A.P."/>
            <person name="Carder C."/>
            <person name="Carter N.P."/>
            <person name="Chapman J.C."/>
            <person name="Clamp M."/>
            <person name="Clark G."/>
            <person name="Clark L.N."/>
            <person name="Clark S.Y."/>
            <person name="Clee C.M."/>
            <person name="Clegg S."/>
            <person name="Cobley V.E."/>
            <person name="Collier R.E."/>
            <person name="Connor R.E."/>
            <person name="Corby N.R."/>
            <person name="Coulson A."/>
            <person name="Coville G.J."/>
            <person name="Deadman R."/>
            <person name="Dhami P.D."/>
            <person name="Dunn M."/>
            <person name="Ellington A.G."/>
            <person name="Frankland J.A."/>
            <person name="Fraser A."/>
            <person name="French L."/>
            <person name="Garner P."/>
            <person name="Grafham D.V."/>
            <person name="Griffiths C."/>
            <person name="Griffiths M.N.D."/>
            <person name="Gwilliam R."/>
            <person name="Hall R.E."/>
            <person name="Hammond S."/>
            <person name="Harley J.L."/>
            <person name="Heath P.D."/>
            <person name="Ho S."/>
            <person name="Holden J.L."/>
            <person name="Howden P.J."/>
            <person name="Huckle E."/>
            <person name="Hunt A.R."/>
            <person name="Hunt S.E."/>
            <person name="Jekosch K."/>
            <person name="Johnson C.M."/>
            <person name="Johnson D."/>
            <person name="Kay M.P."/>
            <person name="Kimberley A.M."/>
            <person name="King A."/>
            <person name="Knights A."/>
            <person name="Laird G.K."/>
            <person name="Lawlor S."/>
            <person name="Lehvaeslaiho M.H."/>
            <person name="Leversha M.A."/>
            <person name="Lloyd C."/>
            <person name="Lloyd D.M."/>
            <person name="Lovell J.D."/>
            <person name="Marsh V.L."/>
            <person name="Martin S.L."/>
            <person name="McConnachie L.J."/>
            <person name="McLay K."/>
            <person name="McMurray A.A."/>
            <person name="Milne S.A."/>
            <person name="Mistry D."/>
            <person name="Moore M.J.F."/>
            <person name="Mullikin J.C."/>
            <person name="Nickerson T."/>
            <person name="Oliver K."/>
            <person name="Parker A."/>
            <person name="Patel R."/>
            <person name="Pearce T.A.V."/>
            <person name="Peck A.I."/>
            <person name="Phillimore B.J.C.T."/>
            <person name="Prathalingam S.R."/>
            <person name="Plumb R.W."/>
            <person name="Ramsay H."/>
            <person name="Rice C.M."/>
            <person name="Ross M.T."/>
            <person name="Scott C.E."/>
            <person name="Sehra H.K."/>
            <person name="Shownkeen R."/>
            <person name="Sims S."/>
            <person name="Skuce C.D."/>
            <person name="Smith M.L."/>
            <person name="Soderlund C."/>
            <person name="Steward C.A."/>
            <person name="Sulston J.E."/>
            <person name="Swann R.M."/>
            <person name="Sycamore N."/>
            <person name="Taylor R."/>
            <person name="Tee L."/>
            <person name="Thomas D.W."/>
            <person name="Thorpe A."/>
            <person name="Tracey A."/>
            <person name="Tromans A.C."/>
            <person name="Vaudin M."/>
            <person name="Wall M."/>
            <person name="Wallis J.M."/>
            <person name="Whitehead S.L."/>
            <person name="Whittaker P."/>
            <person name="Willey D.L."/>
            <person name="Williams L."/>
            <person name="Williams S.A."/>
            <person name="Wilming L."/>
            <person name="Wray P.W."/>
            <person name="Hubbard T."/>
            <person name="Durbin R.M."/>
            <person name="Bentley D.R."/>
            <person name="Beck S."/>
            <person name="Rogers J."/>
        </authorList>
    </citation>
    <scope>NUCLEOTIDE SEQUENCE [LARGE SCALE GENOMIC DNA]</scope>
</reference>
<reference key="9">
    <citation type="submission" date="2005-09" db="EMBL/GenBank/DDBJ databases">
        <authorList>
            <person name="Mural R.J."/>
            <person name="Istrail S."/>
            <person name="Sutton G.G."/>
            <person name="Florea L."/>
            <person name="Halpern A.L."/>
            <person name="Mobarry C.M."/>
            <person name="Lippert R."/>
            <person name="Walenz B."/>
            <person name="Shatkay H."/>
            <person name="Dew I."/>
            <person name="Miller J.R."/>
            <person name="Flanigan M.J."/>
            <person name="Edwards N.J."/>
            <person name="Bolanos R."/>
            <person name="Fasulo D."/>
            <person name="Halldorsson B.V."/>
            <person name="Hannenhalli S."/>
            <person name="Turner R."/>
            <person name="Yooseph S."/>
            <person name="Lu F."/>
            <person name="Nusskern D.R."/>
            <person name="Shue B.C."/>
            <person name="Zheng X.H."/>
            <person name="Zhong F."/>
            <person name="Delcher A.L."/>
            <person name="Huson D.H."/>
            <person name="Kravitz S.A."/>
            <person name="Mouchard L."/>
            <person name="Reinert K."/>
            <person name="Remington K.A."/>
            <person name="Clark A.G."/>
            <person name="Waterman M.S."/>
            <person name="Eichler E.E."/>
            <person name="Adams M.D."/>
            <person name="Hunkapiller M.W."/>
            <person name="Myers E.W."/>
            <person name="Venter J.C."/>
        </authorList>
    </citation>
    <scope>NUCLEOTIDE SEQUENCE [LARGE SCALE GENOMIC DNA]</scope>
</reference>
<reference key="10">
    <citation type="journal article" date="2004" name="Genome Res.">
        <title>The status, quality, and expansion of the NIH full-length cDNA project: the Mammalian Gene Collection (MGC).</title>
        <authorList>
            <consortium name="The MGC Project Team"/>
        </authorList>
    </citation>
    <scope>NUCLEOTIDE SEQUENCE [LARGE SCALE MRNA] (ISOFORMS 6 AND 17)</scope>
    <source>
        <tissue>Brain</tissue>
        <tissue>Eye</tissue>
        <tissue>Testis</tissue>
    </source>
</reference>
<reference key="11">
    <citation type="journal article" date="2006" name="Cell">
        <title>Global, in vivo, and site-specific phosphorylation dynamics in signaling networks.</title>
        <authorList>
            <person name="Olsen J.V."/>
            <person name="Blagoev B."/>
            <person name="Gnad F."/>
            <person name="Macek B."/>
            <person name="Kumar C."/>
            <person name="Mortensen P."/>
            <person name="Mann M."/>
        </authorList>
    </citation>
    <scope>IDENTIFICATION BY MASS SPECTROMETRY [LARGE SCALE ANALYSIS]</scope>
    <source>
        <tissue>Cervix carcinoma</tissue>
    </source>
</reference>
<reference key="12">
    <citation type="journal article" date="2007" name="Science">
        <title>ATM and ATR substrate analysis reveals extensive protein networks responsive to DNA damage.</title>
        <authorList>
            <person name="Matsuoka S."/>
            <person name="Ballif B.A."/>
            <person name="Smogorzewska A."/>
            <person name="McDonald E.R. III"/>
            <person name="Hurov K.E."/>
            <person name="Luo J."/>
            <person name="Bakalarski C.E."/>
            <person name="Zhao Z."/>
            <person name="Solimini N."/>
            <person name="Lerenthal Y."/>
            <person name="Shiloh Y."/>
            <person name="Gygi S.P."/>
            <person name="Elledge S.J."/>
        </authorList>
    </citation>
    <scope>IDENTIFICATION BY MASS SPECTROMETRY [LARGE SCALE ANALYSIS]</scope>
    <source>
        <tissue>Embryonic kidney</tissue>
    </source>
</reference>
<reference key="13">
    <citation type="journal article" date="2008" name="Proc. Natl. Acad. Sci. U.S.A.">
        <title>A quantitative atlas of mitotic phosphorylation.</title>
        <authorList>
            <person name="Dephoure N."/>
            <person name="Zhou C."/>
            <person name="Villen J."/>
            <person name="Beausoleil S.A."/>
            <person name="Bakalarski C.E."/>
            <person name="Elledge S.J."/>
            <person name="Gygi S.P."/>
        </authorList>
    </citation>
    <scope>PHOSPHORYLATION [LARGE SCALE ANALYSIS] AT SER-406; SER-462; SER-465; SER-486; SER-490; SER-495; THR-541; SER-547 AND SER-756</scope>
    <scope>IDENTIFICATION BY MASS SPECTROMETRY [LARGE SCALE ANALYSIS]</scope>
    <source>
        <tissue>Cervix carcinoma</tissue>
    </source>
</reference>
<reference key="14">
    <citation type="journal article" date="2009" name="Anal. Chem.">
        <title>Lys-N and trypsin cover complementary parts of the phosphoproteome in a refined SCX-based approach.</title>
        <authorList>
            <person name="Gauci S."/>
            <person name="Helbig A.O."/>
            <person name="Slijper M."/>
            <person name="Krijgsveld J."/>
            <person name="Heck A.J."/>
            <person name="Mohammed S."/>
        </authorList>
    </citation>
    <scope>IDENTIFICATION BY MASS SPECTROMETRY [LARGE SCALE ANALYSIS]</scope>
</reference>
<reference key="15">
    <citation type="journal article" date="2009" name="Sci. Signal.">
        <title>Quantitative phosphoproteomic analysis of T cell receptor signaling reveals system-wide modulation of protein-protein interactions.</title>
        <authorList>
            <person name="Mayya V."/>
            <person name="Lundgren D.H."/>
            <person name="Hwang S.-I."/>
            <person name="Rezaul K."/>
            <person name="Wu L."/>
            <person name="Eng J.K."/>
            <person name="Rodionov V."/>
            <person name="Han D.K."/>
        </authorList>
    </citation>
    <scope>PHOSPHORYLATION [LARGE SCALE ANALYSIS] AT SER-406; SER-486; SER-490 AND SER-495</scope>
    <scope>IDENTIFICATION BY MASS SPECTROMETRY [LARGE SCALE ANALYSIS]</scope>
    <source>
        <tissue>Leukemic T-cell</tissue>
    </source>
</reference>
<reference key="16">
    <citation type="journal article" date="2009" name="Science">
        <title>Lysine acetylation targets protein complexes and co-regulates major cellular functions.</title>
        <authorList>
            <person name="Choudhary C."/>
            <person name="Kumar C."/>
            <person name="Gnad F."/>
            <person name="Nielsen M.L."/>
            <person name="Rehman M."/>
            <person name="Walther T.C."/>
            <person name="Olsen J.V."/>
            <person name="Mann M."/>
        </authorList>
    </citation>
    <scope>ACETYLATION [LARGE SCALE ANALYSIS] AT LYS-413</scope>
    <scope>IDENTIFICATION BY MASS SPECTROMETRY [LARGE SCALE ANALYSIS]</scope>
</reference>
<reference key="17">
    <citation type="journal article" date="2010" name="Sci. Signal.">
        <title>Quantitative phosphoproteomics reveals widespread full phosphorylation site occupancy during mitosis.</title>
        <authorList>
            <person name="Olsen J.V."/>
            <person name="Vermeulen M."/>
            <person name="Santamaria A."/>
            <person name="Kumar C."/>
            <person name="Miller M.L."/>
            <person name="Jensen L.J."/>
            <person name="Gnad F."/>
            <person name="Cox J."/>
            <person name="Jensen T.S."/>
            <person name="Nigg E.A."/>
            <person name="Brunak S."/>
            <person name="Mann M."/>
        </authorList>
    </citation>
    <scope>PHOSPHORYLATION [LARGE SCALE ANALYSIS] AT THR-404; SER-406; SER-486; SER-495 AND SER-668</scope>
    <scope>IDENTIFICATION BY MASS SPECTROMETRY [LARGE SCALE ANALYSIS]</scope>
    <source>
        <tissue>Cervix carcinoma</tissue>
    </source>
</reference>
<reference key="18">
    <citation type="journal article" date="2011" name="BMC Syst. Biol.">
        <title>Initial characterization of the human central proteome.</title>
        <authorList>
            <person name="Burkard T.R."/>
            <person name="Planyavsky M."/>
            <person name="Kaupe I."/>
            <person name="Breitwieser F.P."/>
            <person name="Buerckstuemmer T."/>
            <person name="Bennett K.L."/>
            <person name="Superti-Furga G."/>
            <person name="Colinge J."/>
        </authorList>
    </citation>
    <scope>IDENTIFICATION BY MASS SPECTROMETRY [LARGE SCALE ANALYSIS]</scope>
</reference>
<reference key="19">
    <citation type="journal article" date="2011" name="Sci. Signal.">
        <title>System-wide temporal characterization of the proteome and phosphoproteome of human embryonic stem cell differentiation.</title>
        <authorList>
            <person name="Rigbolt K.T."/>
            <person name="Prokhorova T.A."/>
            <person name="Akimov V."/>
            <person name="Henningsen J."/>
            <person name="Johansen P.T."/>
            <person name="Kratchmarova I."/>
            <person name="Kassem M."/>
            <person name="Mann M."/>
            <person name="Olsen J.V."/>
            <person name="Blagoev B."/>
        </authorList>
    </citation>
    <scope>PHOSPHORYLATION [LARGE SCALE ANALYSIS] AT SER-425; SER-432; SER-444; SER-490; SER-547; SER-682; THR-746; SER-754 AND SER-756</scope>
    <scope>IDENTIFICATION BY MASS SPECTROMETRY [LARGE SCALE ANALYSIS]</scope>
</reference>
<reference key="20">
    <citation type="journal article" date="2013" name="J. Proteome Res.">
        <title>Toward a comprehensive characterization of a human cancer cell phosphoproteome.</title>
        <authorList>
            <person name="Zhou H."/>
            <person name="Di Palma S."/>
            <person name="Preisinger C."/>
            <person name="Peng M."/>
            <person name="Polat A.N."/>
            <person name="Heck A.J."/>
            <person name="Mohammed S."/>
        </authorList>
    </citation>
    <scope>PHOSPHORYLATION [LARGE SCALE ANALYSIS] AT SER-24; SER-406; SER-417; SER-425; SER-444; SER-460; SER-465; SER-495; SER-514; SER-523; SER-547; THR-563; SER-652; SER-655; SER-668; SER-737; SER-756; SER-1119 AND SER-1141</scope>
    <scope>IDENTIFICATION BY MASS SPECTROMETRY [LARGE SCALE ANALYSIS]</scope>
    <source>
        <tissue>Cervix carcinoma</tissue>
        <tissue>Erythroleukemia</tissue>
    </source>
</reference>
<reference key="21">
    <citation type="journal article" date="2014" name="J. Proteomics">
        <title>An enzyme assisted RP-RPLC approach for in-depth analysis of human liver phosphoproteome.</title>
        <authorList>
            <person name="Bian Y."/>
            <person name="Song C."/>
            <person name="Cheng K."/>
            <person name="Dong M."/>
            <person name="Wang F."/>
            <person name="Huang J."/>
            <person name="Sun D."/>
            <person name="Wang L."/>
            <person name="Ye M."/>
            <person name="Zou H."/>
        </authorList>
    </citation>
    <scope>PHOSPHORYLATION [LARGE SCALE ANALYSIS] AT SER-406; SER-490; SER-547; SER-668; SER-707 AND SER-709</scope>
    <scope>IDENTIFICATION BY MASS SPECTROMETRY [LARGE SCALE ANALYSIS]</scope>
    <source>
        <tissue>Liver</tissue>
    </source>
</reference>
<reference key="22">
    <citation type="journal article" date="2014" name="Nat. Struct. Mol. Biol.">
        <title>Uncovering global SUMOylation signaling networks in a site-specific manner.</title>
        <authorList>
            <person name="Hendriks I.A."/>
            <person name="D'Souza R.C."/>
            <person name="Yang B."/>
            <person name="Verlaan-de Vries M."/>
            <person name="Mann M."/>
            <person name="Vertegaal A.C."/>
        </authorList>
    </citation>
    <scope>SUMOYLATION [LARGE SCALE ANALYSIS] AT LYS-611 AND LYS-645</scope>
    <scope>SUMOYLATION [LARGE SCALE ANALYSIS] AT LYS-12 (ISOFORMS 10; 12; 13; 14; 15; 16; 17; 18; 22; 5; 7 AND 8)</scope>
    <scope>IDENTIFICATION BY MASS SPECTROMETRY [LARGE SCALE ANALYSIS]</scope>
</reference>
<reference key="23">
    <citation type="journal article" date="2015" name="Cell Rep.">
        <title>SUMO-2 orchestrates chromatin modifiers in response to DNA damage.</title>
        <authorList>
            <person name="Hendriks I.A."/>
            <person name="Treffers L.W."/>
            <person name="Verlaan-de Vries M."/>
            <person name="Olsen J.V."/>
            <person name="Vertegaal A.C."/>
        </authorList>
    </citation>
    <scope>SUMOYLATION [LARGE SCALE ANALYSIS] AT LYS-611</scope>
    <scope>IDENTIFICATION BY MASS SPECTROMETRY [LARGE SCALE ANALYSIS]</scope>
</reference>
<reference key="24">
    <citation type="journal article" date="2015" name="Genes Dev.">
        <title>Screen identifies bromodomain protein ZMYND8 in chromatin recognition of transcription-associated DNA damage that promotes homologous recombination.</title>
        <authorList>
            <person name="Gong F."/>
            <person name="Chiu L.Y."/>
            <person name="Cox B."/>
            <person name="Aymard F."/>
            <person name="Clouaire T."/>
            <person name="Leung J.W."/>
            <person name="Cammarata M."/>
            <person name="Perez M."/>
            <person name="Agarwal P."/>
            <person name="Brodbelt J.S."/>
            <person name="Legube G."/>
            <person name="Miller K.M."/>
        </authorList>
    </citation>
    <scope>FUNCTION</scope>
    <scope>INTERACTION WITH CHD4; HDAC1; HDAC2; KDM1A; HISTONE H3 AND HISTONE H4</scope>
    <scope>IDENTIFICATION BY MASS SPECTROMETRY</scope>
    <scope>SUBCELLULAR LOCATION</scope>
    <scope>DOMAIN BROMO (ISOFORM 1)</scope>
    <scope>MUTAGENESIS OF ASN-228</scope>
</reference>
<reference key="25">
    <citation type="journal article" date="2015" name="Mol. Cell. Proteomics">
        <title>System-wide analysis of SUMOylation dynamics in response to replication stress reveals novel small ubiquitin-like modified target proteins and acceptor lysines relevant for genome stability.</title>
        <authorList>
            <person name="Xiao Z."/>
            <person name="Chang J.G."/>
            <person name="Hendriks I.A."/>
            <person name="Sigurdsson J.O."/>
            <person name="Olsen J.V."/>
            <person name="Vertegaal A.C."/>
        </authorList>
    </citation>
    <scope>SUMOYLATION [LARGE SCALE ANALYSIS] AT LYS-611 AND LYS-645</scope>
    <scope>SUMOYLATION [LARGE SCALE ANALYSIS] AT LYS-12 (ISOFORMS 10; 12; 13; 14; 15; 16; 17; 18; 22; 5; 7 AND 8)</scope>
    <scope>IDENTIFICATION BY MASS SPECTROMETRY [LARGE SCALE ANALYSIS]</scope>
</reference>
<reference key="26">
    <citation type="journal article" date="2016" name="Cell Rep.">
        <title>ZMYND8 Co-localizes with NuRD on Target Genes and Regulates Poly(ADP-Ribose)-Dependent Recruitment of GATAD2A/NuRD to Sites of DNA Damage.</title>
        <authorList>
            <person name="Spruijt C.G."/>
            <person name="Luijsterburg M.S."/>
            <person name="Menafra R."/>
            <person name="Lindeboom R.G."/>
            <person name="Jansen P.W."/>
            <person name="Edupuganti R.R."/>
            <person name="Baltissen M.P."/>
            <person name="Wiegant W.W."/>
            <person name="Voelker-Albert M.C."/>
            <person name="Matarese F."/>
            <person name="Mensinga A."/>
            <person name="Poser I."/>
            <person name="Vos H.R."/>
            <person name="Stunnenberg H.G."/>
            <person name="van Attikum H."/>
            <person name="Vermeulen M."/>
        </authorList>
    </citation>
    <scope>FUNCTION</scope>
    <scope>INTERACTION WITH GATAD2A</scope>
    <scope>IDENTIFICATION BY MASS SPECTROMETRY</scope>
    <scope>SUBCELLULAR LOCATION</scope>
    <scope>DOMAIN BROMO (ISOFORM 1) AND MYND-TYPE ZINC FINGER (ISOFORM 17)</scope>
</reference>
<reference key="27">
    <citation type="journal article" date="2016" name="J. Biol. Chem.">
        <title>Selective Recognition of H3.1K36 Dimethylation/H4K16 Acetylation Facilitates the Regulation of All-trans-retinoic Acid (ATRA)-responsive Genes by Putative Chromatin Reader ZMYND8.</title>
        <authorList>
            <person name="Adhikary S."/>
            <person name="Sanyal S."/>
            <person name="Basu M."/>
            <person name="Sengupta I."/>
            <person name="Sen S."/>
            <person name="Srivastava D.K."/>
            <person name="Roy S."/>
            <person name="Das C."/>
        </authorList>
    </citation>
    <scope>FUNCTION</scope>
    <scope>INTERACTION WITH HISTONES H3 AND H4 AND RNA POLYMERASE II</scope>
    <scope>SUBCELLULAR LOCATION</scope>
    <scope>INDUCTION</scope>
    <scope>DOMAIN BROMO AND PWWP</scope>
    <scope>MUTAGENESIS OF 227-TYR-ASN-228 AND PHE-307</scope>
</reference>
<reference key="28">
    <citation type="journal article" date="2017" name="Nat. Struct. Mol. Biol.">
        <title>Site-specific mapping of the human SUMO proteome reveals co-modification with phosphorylation.</title>
        <authorList>
            <person name="Hendriks I.A."/>
            <person name="Lyon D."/>
            <person name="Young C."/>
            <person name="Jensen L.J."/>
            <person name="Vertegaal A.C."/>
            <person name="Nielsen M.L."/>
        </authorList>
    </citation>
    <scope>SUMOYLATION [LARGE SCALE ANALYSIS] AT LYS-56; LYS-70; LYS-390; LYS-413; LYS-453; LYS-505; LYS-530; LYS-549; LYS-611; LYS-645; LYS-657 AND LYS-1115</scope>
    <scope>SUMOYLATION [LARGE SCALE ANALYSIS] AT LYS-12 (ISOFORMS 10; 12; 13; 14; 15; 16; 17; 18; 22; 5; 7 AND 8)</scope>
    <scope>IDENTIFICATION BY MASS SPECTROMETRY [LARGE SCALE ANALYSIS]</scope>
</reference>
<reference key="29">
    <citation type="journal article" date="2018" name="Cell Rep.">
        <title>Positive Regulation of Transcription by Human ZMYND8 through Its Association with P-TEFb Complex.</title>
        <authorList>
            <person name="Ghosh K."/>
            <person name="Tang M."/>
            <person name="Kumari N."/>
            <person name="Nandy A."/>
            <person name="Basu S."/>
            <person name="Mall D.P."/>
            <person name="Rai K."/>
            <person name="Biswas D."/>
        </authorList>
    </citation>
    <scope>FUNCTION</scope>
    <scope>SUBUNIT</scope>
    <scope>INTERACTION WITH CDK9; CCNT1; ZNF592; ZNF687 AND CHD4</scope>
    <scope>IDENTIFICATION BY MASS SPECTROMETRY</scope>
</reference>
<reference key="30">
    <citation type="journal article" date="2020" name="Cell Death Dis.">
        <title>Suppression of poised oncogenes by ZMYND8 promotes chemo-sensitization.</title>
        <authorList>
            <person name="Mukherjee S."/>
            <person name="Adhikary S."/>
            <person name="Gadad S.S."/>
            <person name="Mondal P."/>
            <person name="Sen S."/>
            <person name="Choudhari R."/>
            <person name="Singh V."/>
            <person name="Adhikari S."/>
            <person name="Mandal P."/>
            <person name="Chaudhuri S."/>
            <person name="Sengupta A."/>
            <person name="Lakshmanaswamy R."/>
            <person name="Chakrabarti P."/>
            <person name="Roy S."/>
            <person name="Das C."/>
        </authorList>
    </citation>
    <scope>FUNCTION</scope>
    <scope>INTERACTION WITH KDM5C AND EZH2</scope>
</reference>
<reference key="31">
    <citation type="journal article" date="2020" name="J. Biosci.">
        <title>A novel role of tumor suppressor ZMYND8 in inducing differentiation of breast cancer cells through its dual-histone binding function.</title>
        <authorList>
            <person name="Mukherjee S."/>
            <person name="Sen S."/>
            <person name="Adhikary S."/>
            <person name="Sengupta A."/>
            <person name="Mandal P."/>
            <person name="Dasgupta D."/>
            <person name="Chakrabarti P."/>
            <person name="Roy S."/>
            <person name="Das C."/>
        </authorList>
    </citation>
    <scope>FUNCTION</scope>
    <scope>INTERACTION WITH HISTONES H3 AND H4</scope>
    <scope>SUBCELLULAR LOCATION</scope>
</reference>
<reference key="32">
    <citation type="journal article" date="2022" name="Cell Death Dis.">
        <title>ZMYND8 suppresses MAPT213 LncRNA transcription to promote neuronal differentiation.</title>
        <authorList>
            <person name="Adhikary S."/>
            <person name="Singh V."/>
            <person name="Choudhari R."/>
            <person name="Yang B."/>
            <person name="Adhikari S."/>
            <person name="Ramos E.I."/>
            <person name="Chaudhuri S."/>
            <person name="Roy S."/>
            <person name="Gadad S.S."/>
            <person name="Das C."/>
        </authorList>
    </citation>
    <scope>FUNCTION</scope>
    <scope>INTERACTION WITH CHD4; HDAC1 AND EZH2</scope>
    <scope>SUBCELLULAR LOCATION</scope>
    <scope>TISSUE SPECIFICITY</scope>
</reference>
<reference key="33">
    <citation type="journal article" date="2016" name="Mol. Cell">
        <title>ZMYND8 reads the dual histone mark H3K4me1-H3K14ac to antagonize the expression of metastasis-linked genes.</title>
        <authorList>
            <person name="Li N."/>
            <person name="Li Y."/>
            <person name="Lv J."/>
            <person name="Zheng X."/>
            <person name="Wen H."/>
            <person name="Shen H."/>
            <person name="Zhu G."/>
            <person name="Chen T.Y."/>
            <person name="Dhar S.S."/>
            <person name="Kan P.Y."/>
            <person name="Wang Z."/>
            <person name="Shiekhattar R."/>
            <person name="Shi X."/>
            <person name="Lan F."/>
            <person name="Chen K."/>
            <person name="Li W."/>
            <person name="Li H."/>
            <person name="Lee M.G."/>
        </authorList>
    </citation>
    <scope>X-RAY CRYSTALLOGRAPHY (1.8 ANGSTROMS) OF 93-426</scope>
    <scope>FUNCTION</scope>
    <scope>INTERACTION WITH KDM5D; KDM1A AND HISTONE H3</scope>
    <scope>SUBCELLULAR LOCATION</scope>
    <scope>MUTAGENESIS OF ASP-76; ASP-79; ASP-84; ASP-88; PHE-89; GLU-104 AND 227-TYR-ASN-228</scope>
</reference>
<reference evidence="29" key="34">
    <citation type="journal article" date="2017" name="Structure">
        <title>The Structure of the ZMYND8/Drebrin Complex Suggests a Cytoplasmic Sequestering Mechanism of ZMYND8 by Drebrin.</title>
        <authorList>
            <person name="Yao N."/>
            <person name="Li J."/>
            <person name="Liu H."/>
            <person name="Wan J."/>
            <person name="Liu W."/>
            <person name="Zhang M."/>
        </authorList>
    </citation>
    <scope>X-RAY CRYSTALLOGRAPHY (2.68 ANGSTROMS) OF 83-406 IN COMPLEX WITH ZINC AND DBN1</scope>
    <scope>SUBCELLULAR LOCATION</scope>
    <scope>MUTAGENESIS OF VAL-240; HIS-311 AND ASP-312</scope>
</reference>
<reference key="35">
    <citation type="journal article" date="2022" name="Genet. Med.">
        <title>De Novo ZMYND8 variants result in an autosomal dominant neurodevelopmental disorder with cardiac malformations.</title>
        <authorList>
            <person name="Dias K.R."/>
            <person name="Carlston C.M."/>
            <person name="Blok L.E.R."/>
            <person name="De Hayr L."/>
            <person name="Nawaz U."/>
            <person name="Evans C.A."/>
            <person name="Bayrak-Toydemir P."/>
            <person name="Htun S."/>
            <person name="Zhu Y."/>
            <person name="Ma A."/>
            <person name="Lynch S.A."/>
            <person name="Moorwood C."/>
            <person name="Stals K."/>
            <person name="Ellard S."/>
            <person name="Bainbridge M.N."/>
            <person name="Friedman J."/>
            <person name="Pappas J.G."/>
            <person name="Rabin R."/>
            <person name="Nowak C.B."/>
            <person name="Douglas J."/>
            <person name="Wilson T.E."/>
            <person name="Guillen Sacoto M.J."/>
            <person name="Mullegama S.V."/>
            <person name="Palculict T.B."/>
            <person name="Kirk E.P."/>
            <person name="Pinner J.R."/>
            <person name="Edwards M."/>
            <person name="Montanari F."/>
            <person name="Graziano C."/>
            <person name="Pippucci T."/>
            <person name="Dingmann B."/>
            <person name="Glass I."/>
            <person name="Mefford H.C."/>
            <person name="Shimoji T."/>
            <person name="Suzuki T."/>
            <person name="Yamakawa K."/>
            <person name="Streff H."/>
            <person name="Schaaf C.P."/>
            <person name="Slavotinek A.M."/>
            <person name="Voineagu I."/>
            <person name="Carey J.C."/>
            <person name="Buckley M.F."/>
            <person name="Schenck A."/>
            <person name="Harvey R.J."/>
            <person name="Roscioli T."/>
        </authorList>
    </citation>
    <scope>VARIANTS SYNDROMIC INTELLECTUAL DISABILITY GLU-230; ARG-291; LEU-307; GLU-334; LYS-980; SER-1039; ARG-1054 AND ARG-1055</scope>
    <scope>CHARACTERIZATION OF VARIANTS GLU-230; ARG-291; LEU-307; GLU-334; SER-1039; ARG-1054 AND ARG-1055</scope>
    <scope>INVOLVEMENT IN SYNDROMIC INTELLECTUAL DISABILITY</scope>
    <scope>FUNCTION</scope>
    <scope>INTERACTION WITH DBN1 AND GATAD2A</scope>
    <scope>TISSUE SPECIFICITY</scope>
    <scope>DEVELOPMENTAL STAGE</scope>
</reference>
<name>ZMYD8_HUMAN</name>
<organism>
    <name type="scientific">Homo sapiens</name>
    <name type="common">Human</name>
    <dbReference type="NCBI Taxonomy" id="9606"/>
    <lineage>
        <taxon>Eukaryota</taxon>
        <taxon>Metazoa</taxon>
        <taxon>Chordata</taxon>
        <taxon>Craniata</taxon>
        <taxon>Vertebrata</taxon>
        <taxon>Euteleostomi</taxon>
        <taxon>Mammalia</taxon>
        <taxon>Eutheria</taxon>
        <taxon>Euarchontoglires</taxon>
        <taxon>Primates</taxon>
        <taxon>Haplorrhini</taxon>
        <taxon>Catarrhini</taxon>
        <taxon>Hominidae</taxon>
        <taxon>Homo</taxon>
    </lineage>
</organism>
<proteinExistence type="evidence at protein level"/>
<sequence>MDISTRSKDPGSAERTAQKRKFPSPPHSSNGHSPQDTSTSPIKKKKKPGLLNSNNKEQSELRHGPFYYMKQPLTTDPVDVVPQDGRNDFYCWVCHREGQVLCCELCPRVYHAKCLRLTSEPEGDWFCPECEKITVAECIETQSKAMTMLTIEQLSYLLKFAIQKMKQPGTDAFQKPVPLEQHPDYAEYIFHPMDLCTLEKNAKKKMYGCTEAFLADAKWILHNCIIYNGGNHKLTQIAKVVIKICEHEMNEIEVCPECYLAACQKRDNWFCEPCSNPHPLVWAKLKGFPFWPAKALRDKDGQVDARFFGQHDRAWVPINNCYLMSKEIPFSVKKTKSIFNSAMQEMEVYVENIRRKFGVFNYSPFRTPYTPNSQYQMLLDPTNPSAGTAKIDKQEKVKLNFDMTASPKILMSKPVLSGGTGRRISLSDMPRSPMSTNSSVHTGSDVEQDAEKKATSSHFSASEESMDFLDKSTASPASTKTGQAGSLSGSPKPFSPQLSAPITTKTDKTSTTGSILNLNLDRSKAEMDLKELSESVQQQSTPVPLISPKRQIRSRFQLNLDKTIESCKAQLGINEISEDVYTAVEHSDSEDSEKSDSSDSEYISDDEQKSKNEPEDTEDKEGCQMDKEPSAVKKKPKPTNPVEIKEELKSTSPASEKADPGAVKDKASPEPEKDFSEKAKPSPHPIKDKLKGKDETDSPTVHLGLDSDSESELVIDLGEDHSGREGRKNKKEPKEPSPKQDVVGKTPPSTTVGSHSPPETPVLTRSSAQTSAAGATATTSTSSTVTVTAPAPAATGSPVKKQRPLLPKETAPAVQRVVWNSSSKFQTSSQKWHMQKMQRQQQQQQQQNQQQQPQSSQGTRYQTRQAVKAVQQKEITQSPSTSTITLVTSTQSSPLVTSSGSMSTLVSSVNADLPIATASADVAADIAKYTSKMMDAIKGTMTEIYNDLSKNTTGSTIAEIRRLRIEIEKLQWLHQQELSEMKHNLELTMAEMRQSLEQERDRLIAEVKKQLELEKQQAVDETKKKQWCANCKKEAIFYCCWNTSYCDYPCQQAHWPEHMKSCTQSATAPQQEADAEVNTETLNKSSQGSSSSTQSAPSETASASKEKETSAEKSKESGSTLDLSGSRETPSSILLGSNQGSDHSRSNKSSWSSSDEKRGSTRSDHNTSTSTKSLLPKESRLDTFWD</sequence>
<accession>Q9ULU4</accession>
<accession>B3KVL2</accession>
<accession>B7Z2A8</accession>
<accession>B7Z3E0</accession>
<accession>B7Z680</accession>
<accession>B7ZM62</accession>
<accession>E1P5U5</accession>
<accession>F5H0X3</accession>
<accession>H7C0U2</accession>
<accession>J3KPU3</accession>
<accession>Q13517</accession>
<accession>Q2HXV1</accession>
<accession>Q2HXV2</accession>
<accession>Q2HXV3</accession>
<accession>Q2HXV4</accession>
<accession>Q2HXV7</accession>
<accession>Q2HXV8</accession>
<accession>Q2HXV9</accession>
<accession>Q2HXW0</accession>
<accession>Q2HXW1</accession>
<accession>Q2HXW2</accession>
<accession>Q4JJ94</accession>
<accession>Q4JJ95</accession>
<accession>Q5TH09</accession>
<accession>Q5TH11</accession>
<accession>Q6MZM1</accession>
<accession>Q8WXC5</accession>
<accession>Q9H1F3</accession>
<accession>Q9H1F4</accession>
<accession>Q9H1F5</accession>
<accession>Q9H1L8</accession>
<accession>Q9H1L9</accession>
<accession>Q9H2G5</accession>
<accession>Q9NYN3</accession>
<accession>Q9UIX6</accession>
<keyword id="KW-0002">3D-structure</keyword>
<keyword id="KW-0007">Acetylation</keyword>
<keyword id="KW-0025">Alternative splicing</keyword>
<keyword id="KW-0103">Bromodomain</keyword>
<keyword id="KW-0156">Chromatin regulator</keyword>
<keyword id="KW-0158">Chromosome</keyword>
<keyword id="KW-0963">Cytoplasm</keyword>
<keyword id="KW-0225">Disease variant</keyword>
<keyword id="KW-1017">Isopeptide bond</keyword>
<keyword id="KW-0479">Metal-binding</keyword>
<keyword id="KW-0524">Neurogenesis</keyword>
<keyword id="KW-0539">Nucleus</keyword>
<keyword id="KW-0597">Phosphoprotein</keyword>
<keyword id="KW-1267">Proteomics identification</keyword>
<keyword id="KW-1185">Reference proteome</keyword>
<keyword id="KW-0804">Transcription</keyword>
<keyword id="KW-0805">Transcription regulation</keyword>
<keyword id="KW-0043">Tumor suppressor</keyword>
<keyword id="KW-0832">Ubl conjugation</keyword>
<keyword id="KW-0862">Zinc</keyword>
<keyword id="KW-0863">Zinc-finger</keyword>
<dbReference type="EMBL" id="AF233453">
    <property type="protein sequence ID" value="AAF71262.1"/>
    <property type="molecule type" value="mRNA"/>
</dbReference>
<dbReference type="EMBL" id="U48251">
    <property type="protein sequence ID" value="AAC72244.1"/>
    <property type="status" value="ALT_FRAME"/>
    <property type="molecule type" value="mRNA"/>
</dbReference>
<dbReference type="EMBL" id="AF454056">
    <property type="protein sequence ID" value="AAL50790.1"/>
    <property type="molecule type" value="mRNA"/>
</dbReference>
<dbReference type="EMBL" id="AF273045">
    <property type="protein sequence ID" value="AAG34905.1"/>
    <property type="molecule type" value="mRNA"/>
</dbReference>
<dbReference type="EMBL" id="DQ082998">
    <property type="protein sequence ID" value="AAY85630.1"/>
    <property type="molecule type" value="mRNA"/>
</dbReference>
<dbReference type="EMBL" id="DQ082999">
    <property type="protein sequence ID" value="AAY85631.1"/>
    <property type="molecule type" value="mRNA"/>
</dbReference>
<dbReference type="EMBL" id="DQ368669">
    <property type="protein sequence ID" value="ABC86680.1"/>
    <property type="molecule type" value="mRNA"/>
</dbReference>
<dbReference type="EMBL" id="DQ368670">
    <property type="protein sequence ID" value="ABC86681.1"/>
    <property type="molecule type" value="mRNA"/>
</dbReference>
<dbReference type="EMBL" id="DQ368671">
    <property type="protein sequence ID" value="ABC86682.1"/>
    <property type="molecule type" value="mRNA"/>
</dbReference>
<dbReference type="EMBL" id="DQ368672">
    <property type="protein sequence ID" value="ABC86683.1"/>
    <property type="molecule type" value="mRNA"/>
</dbReference>
<dbReference type="EMBL" id="DQ368673">
    <property type="protein sequence ID" value="ABC86684.1"/>
    <property type="molecule type" value="mRNA"/>
</dbReference>
<dbReference type="EMBL" id="DQ368674">
    <property type="protein sequence ID" value="ABC86685.1"/>
    <property type="molecule type" value="mRNA"/>
</dbReference>
<dbReference type="EMBL" id="DQ368677">
    <property type="protein sequence ID" value="ABC86688.1"/>
    <property type="molecule type" value="mRNA"/>
</dbReference>
<dbReference type="EMBL" id="DQ368678">
    <property type="protein sequence ID" value="ABC86689.1"/>
    <property type="molecule type" value="mRNA"/>
</dbReference>
<dbReference type="EMBL" id="DQ368679">
    <property type="protein sequence ID" value="ABC86690.1"/>
    <property type="molecule type" value="mRNA"/>
</dbReference>
<dbReference type="EMBL" id="DQ368680">
    <property type="protein sequence ID" value="ABC86691.1"/>
    <property type="molecule type" value="mRNA"/>
</dbReference>
<dbReference type="EMBL" id="AB032951">
    <property type="protein sequence ID" value="BAA86439.1"/>
    <property type="status" value="ALT_INIT"/>
    <property type="molecule type" value="mRNA"/>
</dbReference>
<dbReference type="EMBL" id="AK122966">
    <property type="protein sequence ID" value="BAG53824.1"/>
    <property type="molecule type" value="mRNA"/>
</dbReference>
<dbReference type="EMBL" id="AK294511">
    <property type="protein sequence ID" value="BAH11794.1"/>
    <property type="molecule type" value="mRNA"/>
</dbReference>
<dbReference type="EMBL" id="AK295747">
    <property type="protein sequence ID" value="BAH12176.1"/>
    <property type="molecule type" value="mRNA"/>
</dbReference>
<dbReference type="EMBL" id="AK299899">
    <property type="protein sequence ID" value="BAH13166.1"/>
    <property type="molecule type" value="mRNA"/>
</dbReference>
<dbReference type="EMBL" id="BX641005">
    <property type="protein sequence ID" value="CAE46008.1"/>
    <property type="molecule type" value="mRNA"/>
</dbReference>
<dbReference type="EMBL" id="AL031666">
    <property type="protein sequence ID" value="CAI21842.1"/>
    <property type="molecule type" value="Genomic_DNA"/>
</dbReference>
<dbReference type="EMBL" id="AL049540">
    <property type="protein sequence ID" value="CAI21842.1"/>
    <property type="status" value="JOINED"/>
    <property type="molecule type" value="Genomic_DNA"/>
</dbReference>
<dbReference type="EMBL" id="AL022342">
    <property type="protein sequence ID" value="CAI21842.1"/>
    <property type="status" value="JOINED"/>
    <property type="molecule type" value="Genomic_DNA"/>
</dbReference>
<dbReference type="EMBL" id="AL049540">
    <property type="protein sequence ID" value="CAI23169.1"/>
    <property type="molecule type" value="Genomic_DNA"/>
</dbReference>
<dbReference type="EMBL" id="AL031666">
    <property type="protein sequence ID" value="CAI23169.1"/>
    <property type="status" value="JOINED"/>
    <property type="molecule type" value="Genomic_DNA"/>
</dbReference>
<dbReference type="EMBL" id="AL022342">
    <property type="protein sequence ID" value="CAI23169.1"/>
    <property type="status" value="JOINED"/>
    <property type="molecule type" value="Genomic_DNA"/>
</dbReference>
<dbReference type="EMBL" id="AL049540">
    <property type="protein sequence ID" value="CAI23168.1"/>
    <property type="molecule type" value="Genomic_DNA"/>
</dbReference>
<dbReference type="EMBL" id="AL031666">
    <property type="protein sequence ID" value="CAI23168.1"/>
    <property type="status" value="JOINED"/>
    <property type="molecule type" value="Genomic_DNA"/>
</dbReference>
<dbReference type="EMBL" id="AL390212">
    <property type="protein sequence ID" value="CAI23168.1"/>
    <property type="status" value="JOINED"/>
    <property type="molecule type" value="Genomic_DNA"/>
</dbReference>
<dbReference type="EMBL" id="CH471077">
    <property type="protein sequence ID" value="EAW75703.1"/>
    <property type="molecule type" value="Genomic_DNA"/>
</dbReference>
<dbReference type="EMBL" id="CH471077">
    <property type="protein sequence ID" value="EAW75706.1"/>
    <property type="molecule type" value="Genomic_DNA"/>
</dbReference>
<dbReference type="EMBL" id="CH471077">
    <property type="protein sequence ID" value="EAW75709.1"/>
    <property type="molecule type" value="Genomic_DNA"/>
</dbReference>
<dbReference type="EMBL" id="CH471077">
    <property type="protein sequence ID" value="EAW75711.1"/>
    <property type="molecule type" value="Genomic_DNA"/>
</dbReference>
<dbReference type="EMBL" id="CH471077">
    <property type="protein sequence ID" value="EAW75712.1"/>
    <property type="molecule type" value="Genomic_DNA"/>
</dbReference>
<dbReference type="EMBL" id="CH471077">
    <property type="protein sequence ID" value="EAW75715.1"/>
    <property type="molecule type" value="Genomic_DNA"/>
</dbReference>
<dbReference type="EMBL" id="BC030721">
    <property type="protein sequence ID" value="AAH30721.2"/>
    <property type="molecule type" value="mRNA"/>
</dbReference>
<dbReference type="EMBL" id="BC136608">
    <property type="protein sequence ID" value="AAI36609.1"/>
    <property type="molecule type" value="mRNA"/>
</dbReference>
<dbReference type="EMBL" id="BC144289">
    <property type="protein sequence ID" value="AAI44290.1"/>
    <property type="molecule type" value="mRNA"/>
</dbReference>
<dbReference type="CCDS" id="CCDS13404.1">
    <molecule id="Q9ULU4-12"/>
</dbReference>
<dbReference type="CCDS" id="CCDS13405.1">
    <molecule id="Q9ULU4-13"/>
</dbReference>
<dbReference type="CCDS" id="CCDS46613.1">
    <molecule id="Q9ULU4-14"/>
</dbReference>
<dbReference type="CCDS" id="CCDS63300.1">
    <molecule id="Q9ULU4-11"/>
</dbReference>
<dbReference type="CCDS" id="CCDS63301.1">
    <molecule id="Q9ULU4-9"/>
</dbReference>
<dbReference type="CCDS" id="CCDS63303.1">
    <molecule id="Q9ULU4-18"/>
</dbReference>
<dbReference type="CCDS" id="CCDS63304.1">
    <molecule id="Q9ULU4-17"/>
</dbReference>
<dbReference type="CCDS" id="CCDS63306.1">
    <molecule id="Q9ULU4-7"/>
</dbReference>
<dbReference type="CCDS" id="CCDS74738.1">
    <molecule id="Q9ULU4-20"/>
</dbReference>
<dbReference type="CCDS" id="CCDS86961.1">
    <molecule id="Q9ULU4-1"/>
</dbReference>
<dbReference type="CCDS" id="CCDS86962.1">
    <molecule id="Q9ULU4-19"/>
</dbReference>
<dbReference type="RefSeq" id="NP_001268700.1">
    <molecule id="Q9ULU4-17"/>
    <property type="nucleotide sequence ID" value="NM_001281771.3"/>
</dbReference>
<dbReference type="RefSeq" id="NP_001268701.1">
    <molecule id="Q9ULU4-20"/>
    <property type="nucleotide sequence ID" value="NM_001281772.3"/>
</dbReference>
<dbReference type="RefSeq" id="NP_001268702.1">
    <molecule id="Q9ULU4-11"/>
    <property type="nucleotide sequence ID" value="NM_001281773.3"/>
</dbReference>
<dbReference type="RefSeq" id="NP_001268703.1">
    <molecule id="Q9ULU4-9"/>
    <property type="nucleotide sequence ID" value="NM_001281774.3"/>
</dbReference>
<dbReference type="RefSeq" id="NP_001268704.1">
    <molecule id="Q9ULU4-7"/>
    <property type="nucleotide sequence ID" value="NM_001281775.3"/>
</dbReference>
<dbReference type="RefSeq" id="NP_001268705.1">
    <molecule id="Q9ULU4-8"/>
    <property type="nucleotide sequence ID" value="NM_001281776.3"/>
</dbReference>
<dbReference type="RefSeq" id="NP_001268706.1">
    <molecule id="Q9ULU4-16"/>
    <property type="nucleotide sequence ID" value="NM_001281777.3"/>
</dbReference>
<dbReference type="RefSeq" id="NP_001268707.1">
    <molecule id="Q9ULU4-5"/>
    <property type="nucleotide sequence ID" value="NM_001281778.3"/>
</dbReference>
<dbReference type="RefSeq" id="NP_001268710.1">
    <molecule id="Q9ULU4-15"/>
    <property type="nucleotide sequence ID" value="NM_001281781.3"/>
</dbReference>
<dbReference type="RefSeq" id="NP_001268711.1">
    <property type="nucleotide sequence ID" value="NM_001281782.2"/>
</dbReference>
<dbReference type="RefSeq" id="NP_001268712.1">
    <molecule id="Q9ULU4-10"/>
    <property type="nucleotide sequence ID" value="NM_001281783.3"/>
</dbReference>
<dbReference type="RefSeq" id="NP_001268713.1">
    <molecule id="Q9ULU4-18"/>
    <property type="nucleotide sequence ID" value="NM_001281784.3"/>
</dbReference>
<dbReference type="RefSeq" id="NP_001350643.1">
    <molecule id="Q9ULU4-19"/>
    <property type="nucleotide sequence ID" value="NM_001363714.1"/>
</dbReference>
<dbReference type="RefSeq" id="NP_001350670.1">
    <molecule id="Q9ULU4-1"/>
    <property type="nucleotide sequence ID" value="NM_001363741.2"/>
</dbReference>
<dbReference type="RefSeq" id="NP_036540.3">
    <molecule id="Q9ULU4-12"/>
    <property type="nucleotide sequence ID" value="NM_012408.5"/>
</dbReference>
<dbReference type="RefSeq" id="NP_898868.1">
    <molecule id="Q9ULU4-13"/>
    <property type="nucleotide sequence ID" value="NM_183047.4"/>
</dbReference>
<dbReference type="RefSeq" id="NP_898869.1">
    <molecule id="Q9ULU4-14"/>
    <property type="nucleotide sequence ID" value="NM_183048.4"/>
</dbReference>
<dbReference type="RefSeq" id="XP_005260413.1">
    <property type="nucleotide sequence ID" value="XM_005260356.4"/>
</dbReference>
<dbReference type="RefSeq" id="XP_005260417.1">
    <property type="nucleotide sequence ID" value="XM_005260360.4"/>
</dbReference>
<dbReference type="RefSeq" id="XP_005260423.1">
    <property type="nucleotide sequence ID" value="XM_005260366.2"/>
</dbReference>
<dbReference type="RefSeq" id="XP_006723825.1">
    <property type="nucleotide sequence ID" value="XM_006723762.3"/>
</dbReference>
<dbReference type="RefSeq" id="XP_011527053.1">
    <property type="nucleotide sequence ID" value="XM_011528751.1"/>
</dbReference>
<dbReference type="RefSeq" id="XP_016883250.1">
    <property type="nucleotide sequence ID" value="XM_017027761.1"/>
</dbReference>
<dbReference type="RefSeq" id="XP_016883256.1">
    <property type="nucleotide sequence ID" value="XM_017027767.1"/>
</dbReference>
<dbReference type="RefSeq" id="XP_016883257.1">
    <property type="nucleotide sequence ID" value="XM_017027768.1"/>
</dbReference>
<dbReference type="PDB" id="4COS">
    <property type="method" value="X-ray"/>
    <property type="resolution" value="1.67 A"/>
    <property type="chains" value="A=83-406"/>
</dbReference>
<dbReference type="PDB" id="5B73">
    <property type="method" value="X-ray"/>
    <property type="resolution" value="1.80 A"/>
    <property type="chains" value="A=73-406"/>
</dbReference>
<dbReference type="PDB" id="5MQ4">
    <property type="method" value="X-ray"/>
    <property type="resolution" value="2.70 A"/>
    <property type="chains" value="A/B/C/D/E/F=949-1073"/>
</dbReference>
<dbReference type="PDB" id="5Y1Z">
    <property type="method" value="X-ray"/>
    <property type="resolution" value="2.68 A"/>
    <property type="chains" value="C/D=83-406"/>
</dbReference>
<dbReference type="PDB" id="7CWH">
    <property type="method" value="NMR"/>
    <property type="chains" value="B=83-143"/>
</dbReference>
<dbReference type="PDBsum" id="4COS"/>
<dbReference type="PDBsum" id="5B73"/>
<dbReference type="PDBsum" id="5MQ4"/>
<dbReference type="PDBsum" id="5Y1Z"/>
<dbReference type="PDBsum" id="7CWH"/>
<dbReference type="SMR" id="Q9ULU4"/>
<dbReference type="BioGRID" id="117146">
    <property type="interactions" value="199"/>
</dbReference>
<dbReference type="CORUM" id="Q9ULU4"/>
<dbReference type="FunCoup" id="Q9ULU4">
    <property type="interactions" value="4398"/>
</dbReference>
<dbReference type="IntAct" id="Q9ULU4">
    <property type="interactions" value="88"/>
</dbReference>
<dbReference type="MINT" id="Q9ULU4"/>
<dbReference type="STRING" id="9606.ENSP00000439800"/>
<dbReference type="BindingDB" id="Q9ULU4"/>
<dbReference type="ChEMBL" id="CHEMBL3627580"/>
<dbReference type="GlyCosmos" id="Q9ULU4">
    <property type="glycosylation" value="1 site, 1 glycan"/>
</dbReference>
<dbReference type="GlyGen" id="Q9ULU4">
    <property type="glycosylation" value="14 sites, 1 N-linked glycan (1 site), 1 O-linked glycan (13 sites)"/>
</dbReference>
<dbReference type="iPTMnet" id="Q9ULU4"/>
<dbReference type="PhosphoSitePlus" id="Q9ULU4"/>
<dbReference type="SwissPalm" id="Q9ULU4"/>
<dbReference type="BioMuta" id="ZMYND8"/>
<dbReference type="DMDM" id="25453223"/>
<dbReference type="jPOST" id="Q9ULU4"/>
<dbReference type="MassIVE" id="Q9ULU4"/>
<dbReference type="PaxDb" id="9606-ENSP00000420095"/>
<dbReference type="PeptideAtlas" id="Q9ULU4"/>
<dbReference type="ProteomicsDB" id="25473"/>
<dbReference type="ProteomicsDB" id="44416"/>
<dbReference type="ProteomicsDB" id="61294"/>
<dbReference type="ProteomicsDB" id="61295"/>
<dbReference type="ProteomicsDB" id="7246"/>
<dbReference type="ProteomicsDB" id="85109">
    <molecule id="Q9ULU4-1"/>
</dbReference>
<dbReference type="ProteomicsDB" id="85110">
    <molecule id="Q9ULU4-10"/>
</dbReference>
<dbReference type="ProteomicsDB" id="85111">
    <molecule id="Q9ULU4-11"/>
</dbReference>
<dbReference type="ProteomicsDB" id="85112">
    <molecule id="Q9ULU4-12"/>
</dbReference>
<dbReference type="ProteomicsDB" id="85113">
    <molecule id="Q9ULU4-13"/>
</dbReference>
<dbReference type="ProteomicsDB" id="85114">
    <molecule id="Q9ULU4-14"/>
</dbReference>
<dbReference type="ProteomicsDB" id="85115">
    <molecule id="Q9ULU4-2"/>
</dbReference>
<dbReference type="ProteomicsDB" id="85116">
    <molecule id="Q9ULU4-3"/>
</dbReference>
<dbReference type="ProteomicsDB" id="85117">
    <molecule id="Q9ULU4-4"/>
</dbReference>
<dbReference type="ProteomicsDB" id="85118">
    <molecule id="Q9ULU4-5"/>
</dbReference>
<dbReference type="ProteomicsDB" id="85119">
    <molecule id="Q9ULU4-6"/>
</dbReference>
<dbReference type="ProteomicsDB" id="85120">
    <molecule id="Q9ULU4-7"/>
</dbReference>
<dbReference type="ProteomicsDB" id="85121">
    <molecule id="Q9ULU4-8"/>
</dbReference>
<dbReference type="ProteomicsDB" id="85122">
    <molecule id="Q9ULU4-9"/>
</dbReference>
<dbReference type="Pumba" id="Q9ULU4"/>
<dbReference type="Antibodypedia" id="13294">
    <property type="antibodies" value="192 antibodies from 31 providers"/>
</dbReference>
<dbReference type="DNASU" id="23613"/>
<dbReference type="Ensembl" id="ENST00000262975.8">
    <molecule id="Q9ULU4-9"/>
    <property type="protein sequence ID" value="ENSP00000262975.4"/>
    <property type="gene ID" value="ENSG00000101040.20"/>
</dbReference>
<dbReference type="Ensembl" id="ENST00000311275.11">
    <molecule id="Q9ULU4-1"/>
    <property type="protein sequence ID" value="ENSP00000312237.7"/>
    <property type="gene ID" value="ENSG00000101040.20"/>
</dbReference>
<dbReference type="Ensembl" id="ENST00000352431.6">
    <molecule id="Q9ULU4-12"/>
    <property type="protein sequence ID" value="ENSP00000335537.3"/>
    <property type="gene ID" value="ENSG00000101040.20"/>
</dbReference>
<dbReference type="Ensembl" id="ENST00000355972.8">
    <molecule id="Q9ULU4-11"/>
    <property type="protein sequence ID" value="ENSP00000348246.4"/>
    <property type="gene ID" value="ENSG00000101040.20"/>
</dbReference>
<dbReference type="Ensembl" id="ENST00000360911.7">
    <molecule id="Q9ULU4-14"/>
    <property type="protein sequence ID" value="ENSP00000354166.3"/>
    <property type="gene ID" value="ENSG00000101040.20"/>
</dbReference>
<dbReference type="Ensembl" id="ENST00000372023.7">
    <molecule id="Q9ULU4-23"/>
    <property type="protein sequence ID" value="ENSP00000361093.5"/>
    <property type="gene ID" value="ENSG00000101040.20"/>
</dbReference>
<dbReference type="Ensembl" id="ENST00000396281.8">
    <molecule id="Q9ULU4-20"/>
    <property type="protein sequence ID" value="ENSP00000379577.4"/>
    <property type="gene ID" value="ENSG00000101040.20"/>
</dbReference>
<dbReference type="Ensembl" id="ENST00000446994.6">
    <molecule id="Q9ULU4-11"/>
    <property type="protein sequence ID" value="ENSP00000396725.3"/>
    <property type="gene ID" value="ENSG00000101040.20"/>
</dbReference>
<dbReference type="Ensembl" id="ENST00000458360.6">
    <molecule id="Q9ULU4-17"/>
    <property type="protein sequence ID" value="ENSP00000392964.2"/>
    <property type="gene ID" value="ENSG00000101040.20"/>
</dbReference>
<dbReference type="Ensembl" id="ENST00000461685.5">
    <molecule id="Q9ULU4-13"/>
    <property type="protein sequence ID" value="ENSP00000418210.1"/>
    <property type="gene ID" value="ENSG00000101040.20"/>
</dbReference>
<dbReference type="Ensembl" id="ENST00000471951.7">
    <molecule id="Q9ULU4-7"/>
    <property type="protein sequence ID" value="ENSP00000420095.2"/>
    <property type="gene ID" value="ENSG00000101040.20"/>
</dbReference>
<dbReference type="Ensembl" id="ENST00000536340.5">
    <molecule id="Q9ULU4-19"/>
    <property type="protein sequence ID" value="ENSP00000439800.1"/>
    <property type="gene ID" value="ENSG00000101040.20"/>
</dbReference>
<dbReference type="Ensembl" id="ENST00000540497.5">
    <molecule id="Q9ULU4-18"/>
    <property type="protein sequence ID" value="ENSP00000443086.3"/>
    <property type="gene ID" value="ENSG00000101040.20"/>
</dbReference>
<dbReference type="GeneID" id="23613"/>
<dbReference type="KEGG" id="hsa:23613"/>
<dbReference type="MANE-Select" id="ENST00000471951.7">
    <molecule id="Q9ULU4-7"/>
    <property type="protein sequence ID" value="ENSP00000420095.2"/>
    <property type="RefSeq nucleotide sequence ID" value="NM_001281775.3"/>
    <property type="RefSeq protein sequence ID" value="NP_001268704.1"/>
</dbReference>
<dbReference type="UCSC" id="uc002xss.3">
    <molecule id="Q9ULU4-1"/>
    <property type="organism name" value="human"/>
</dbReference>
<dbReference type="AGR" id="HGNC:9397"/>
<dbReference type="CTD" id="23613"/>
<dbReference type="DisGeNET" id="23613"/>
<dbReference type="GeneCards" id="ZMYND8"/>
<dbReference type="HGNC" id="HGNC:9397">
    <property type="gene designation" value="ZMYND8"/>
</dbReference>
<dbReference type="HPA" id="ENSG00000101040">
    <property type="expression patterns" value="Low tissue specificity"/>
</dbReference>
<dbReference type="MIM" id="615713">
    <property type="type" value="gene"/>
</dbReference>
<dbReference type="neXtProt" id="NX_Q9ULU4"/>
<dbReference type="OpenTargets" id="ENSG00000101040"/>
<dbReference type="PharmGKB" id="PA162409890"/>
<dbReference type="VEuPathDB" id="HostDB:ENSG00000101040"/>
<dbReference type="eggNOG" id="KOG3612">
    <property type="taxonomic scope" value="Eukaryota"/>
</dbReference>
<dbReference type="GeneTree" id="ENSGT00940000154897"/>
<dbReference type="InParanoid" id="Q9ULU4"/>
<dbReference type="OMA" id="MPVQRFN"/>
<dbReference type="OrthoDB" id="9483515at2759"/>
<dbReference type="PAN-GO" id="Q9ULU4">
    <property type="GO annotations" value="3 GO annotations based on evolutionary models"/>
</dbReference>
<dbReference type="PhylomeDB" id="Q9ULU4"/>
<dbReference type="TreeFam" id="TF317221"/>
<dbReference type="PathwayCommons" id="Q9ULU4"/>
<dbReference type="SignaLink" id="Q9ULU4"/>
<dbReference type="SIGNOR" id="Q9ULU4"/>
<dbReference type="BioGRID-ORCS" id="23613">
    <property type="hits" value="220 hits in 1181 CRISPR screens"/>
</dbReference>
<dbReference type="ChiTaRS" id="ZMYND8">
    <property type="organism name" value="human"/>
</dbReference>
<dbReference type="EvolutionaryTrace" id="Q9ULU4"/>
<dbReference type="GeneWiki" id="ZMYND8"/>
<dbReference type="GenomeRNAi" id="23613"/>
<dbReference type="Pharos" id="Q9ULU4">
    <property type="development level" value="Tbio"/>
</dbReference>
<dbReference type="PRO" id="PR:Q9ULU4"/>
<dbReference type="Proteomes" id="UP000005640">
    <property type="component" value="Chromosome 20"/>
</dbReference>
<dbReference type="RNAct" id="Q9ULU4">
    <property type="molecule type" value="protein"/>
</dbReference>
<dbReference type="Bgee" id="ENSG00000101040">
    <property type="expression patterns" value="Expressed in corpus epididymis and 217 other cell types or tissues"/>
</dbReference>
<dbReference type="ExpressionAtlas" id="Q9ULU4">
    <property type="expression patterns" value="baseline and differential"/>
</dbReference>
<dbReference type="GO" id="GO:0000785">
    <property type="term" value="C:chromatin"/>
    <property type="evidence" value="ECO:0000314"/>
    <property type="project" value="UniProtKB"/>
</dbReference>
<dbReference type="GO" id="GO:0005737">
    <property type="term" value="C:cytoplasm"/>
    <property type="evidence" value="ECO:0000315"/>
    <property type="project" value="UniProtKB"/>
</dbReference>
<dbReference type="GO" id="GO:0043198">
    <property type="term" value="C:dendritic shaft"/>
    <property type="evidence" value="ECO:0007669"/>
    <property type="project" value="Ensembl"/>
</dbReference>
<dbReference type="GO" id="GO:0043197">
    <property type="term" value="C:dendritic spine"/>
    <property type="evidence" value="ECO:0007669"/>
    <property type="project" value="Ensembl"/>
</dbReference>
<dbReference type="GO" id="GO:0005730">
    <property type="term" value="C:nucleolus"/>
    <property type="evidence" value="ECO:0000314"/>
    <property type="project" value="HPA"/>
</dbReference>
<dbReference type="GO" id="GO:0005654">
    <property type="term" value="C:nucleoplasm"/>
    <property type="evidence" value="ECO:0000314"/>
    <property type="project" value="HPA"/>
</dbReference>
<dbReference type="GO" id="GO:0005634">
    <property type="term" value="C:nucleus"/>
    <property type="evidence" value="ECO:0000314"/>
    <property type="project" value="UniProtKB"/>
</dbReference>
<dbReference type="GO" id="GO:0090734">
    <property type="term" value="C:site of DNA damage"/>
    <property type="evidence" value="ECO:0000314"/>
    <property type="project" value="UniProtKB"/>
</dbReference>
<dbReference type="GO" id="GO:0140297">
    <property type="term" value="F:DNA-binding transcription factor binding"/>
    <property type="evidence" value="ECO:0000250"/>
    <property type="project" value="BHF-UCL"/>
</dbReference>
<dbReference type="GO" id="GO:0140015">
    <property type="term" value="F:histone H3K14ac reader activity"/>
    <property type="evidence" value="ECO:0000314"/>
    <property type="project" value="UniProtKB"/>
</dbReference>
<dbReference type="GO" id="GO:0140109">
    <property type="term" value="F:histone H3K4me1 reader activity"/>
    <property type="evidence" value="ECO:0000314"/>
    <property type="project" value="GO_Central"/>
</dbReference>
<dbReference type="GO" id="GO:0035064">
    <property type="term" value="F:methylated histone binding"/>
    <property type="evidence" value="ECO:0000314"/>
    <property type="project" value="UniProtKB"/>
</dbReference>
<dbReference type="GO" id="GO:0019904">
    <property type="term" value="F:protein domain specific binding"/>
    <property type="evidence" value="ECO:0000314"/>
    <property type="project" value="UniProtKB"/>
</dbReference>
<dbReference type="GO" id="GO:0003714">
    <property type="term" value="F:transcription corepressor activity"/>
    <property type="evidence" value="ECO:0000315"/>
    <property type="project" value="UniProtKB"/>
</dbReference>
<dbReference type="GO" id="GO:0008270">
    <property type="term" value="F:zinc ion binding"/>
    <property type="evidence" value="ECO:0000314"/>
    <property type="project" value="UniProtKB"/>
</dbReference>
<dbReference type="GO" id="GO:0000724">
    <property type="term" value="P:double-strand break repair via homologous recombination"/>
    <property type="evidence" value="ECO:0000315"/>
    <property type="project" value="UniProtKB"/>
</dbReference>
<dbReference type="GO" id="GO:0098815">
    <property type="term" value="P:modulation of excitatory postsynaptic potential"/>
    <property type="evidence" value="ECO:0007669"/>
    <property type="project" value="Ensembl"/>
</dbReference>
<dbReference type="GO" id="GO:0030336">
    <property type="term" value="P:negative regulation of cell migration"/>
    <property type="evidence" value="ECO:0000315"/>
    <property type="project" value="UniProtKB"/>
</dbReference>
<dbReference type="GO" id="GO:0000122">
    <property type="term" value="P:negative regulation of transcription by RNA polymerase II"/>
    <property type="evidence" value="ECO:0000315"/>
    <property type="project" value="UniProtKB"/>
</dbReference>
<dbReference type="GO" id="GO:0007399">
    <property type="term" value="P:nervous system development"/>
    <property type="evidence" value="ECO:0000315"/>
    <property type="project" value="UniProtKB"/>
</dbReference>
<dbReference type="GO" id="GO:0060999">
    <property type="term" value="P:positive regulation of dendritic spine development"/>
    <property type="evidence" value="ECO:0007669"/>
    <property type="project" value="Ensembl"/>
</dbReference>
<dbReference type="GO" id="GO:1902952">
    <property type="term" value="P:positive regulation of dendritic spine maintenance"/>
    <property type="evidence" value="ECO:0007669"/>
    <property type="project" value="Ensembl"/>
</dbReference>
<dbReference type="GO" id="GO:0051491">
    <property type="term" value="P:positive regulation of filopodium assembly"/>
    <property type="evidence" value="ECO:0007669"/>
    <property type="project" value="Ensembl"/>
</dbReference>
<dbReference type="GO" id="GO:0032968">
    <property type="term" value="P:positive regulation of transcription elongation by RNA polymerase II"/>
    <property type="evidence" value="ECO:0000315"/>
    <property type="project" value="UniProtKB"/>
</dbReference>
<dbReference type="GO" id="GO:0071168">
    <property type="term" value="P:protein localization to chromatin"/>
    <property type="evidence" value="ECO:0000315"/>
    <property type="project" value="UniProtKB"/>
</dbReference>
<dbReference type="GO" id="GO:1902897">
    <property type="term" value="P:regulation of postsynaptic density protein 95 clustering"/>
    <property type="evidence" value="ECO:0007669"/>
    <property type="project" value="Ensembl"/>
</dbReference>
<dbReference type="CDD" id="cd05508">
    <property type="entry name" value="Bromo_RACK7"/>
    <property type="match status" value="1"/>
</dbReference>
<dbReference type="CDD" id="cd15538">
    <property type="entry name" value="PHD_PRKCBP1"/>
    <property type="match status" value="1"/>
</dbReference>
<dbReference type="CDD" id="cd20160">
    <property type="entry name" value="PWWP_PRKCBP1"/>
    <property type="match status" value="1"/>
</dbReference>
<dbReference type="FunFam" id="2.30.30.140:FF:000003">
    <property type="entry name" value="Protein kinase C-binding protein 1 isoform C"/>
    <property type="match status" value="1"/>
</dbReference>
<dbReference type="FunFam" id="6.10.140.2220:FF:000002">
    <property type="entry name" value="Protein kinase C-binding protein 1 isoform C"/>
    <property type="match status" value="1"/>
</dbReference>
<dbReference type="FunFam" id="1.20.920.10:FF:000005">
    <property type="entry name" value="protein kinase C-binding protein 1 isoform X2"/>
    <property type="match status" value="1"/>
</dbReference>
<dbReference type="Gene3D" id="2.30.30.140">
    <property type="match status" value="1"/>
</dbReference>
<dbReference type="Gene3D" id="6.10.140.2220">
    <property type="match status" value="1"/>
</dbReference>
<dbReference type="Gene3D" id="1.20.920.10">
    <property type="entry name" value="Bromodomain-like"/>
    <property type="match status" value="1"/>
</dbReference>
<dbReference type="Gene3D" id="3.30.40.10">
    <property type="entry name" value="Zinc/RING finger domain, C3HC4 (zinc finger)"/>
    <property type="match status" value="1"/>
</dbReference>
<dbReference type="InterPro" id="IPR001487">
    <property type="entry name" value="Bromodomain"/>
</dbReference>
<dbReference type="InterPro" id="IPR036427">
    <property type="entry name" value="Bromodomain-like_sf"/>
</dbReference>
<dbReference type="InterPro" id="IPR057053">
    <property type="entry name" value="MYND_ZMYND11_ZMYD8"/>
</dbReference>
<dbReference type="InterPro" id="IPR044075">
    <property type="entry name" value="PRKCBP1_PHD"/>
</dbReference>
<dbReference type="InterPro" id="IPR000313">
    <property type="entry name" value="PWWP_dom"/>
</dbReference>
<dbReference type="InterPro" id="IPR019786">
    <property type="entry name" value="Zinc_finger_PHD-type_CS"/>
</dbReference>
<dbReference type="InterPro" id="IPR021931">
    <property type="entry name" value="ZMYND8"/>
</dbReference>
<dbReference type="InterPro" id="IPR037967">
    <property type="entry name" value="ZMYND8_Bromo_dom"/>
</dbReference>
<dbReference type="InterPro" id="IPR056987">
    <property type="entry name" value="ZMYND8_CC"/>
</dbReference>
<dbReference type="InterPro" id="IPR011011">
    <property type="entry name" value="Znf_FYVE_PHD"/>
</dbReference>
<dbReference type="InterPro" id="IPR002893">
    <property type="entry name" value="Znf_MYND"/>
</dbReference>
<dbReference type="InterPro" id="IPR001965">
    <property type="entry name" value="Znf_PHD"/>
</dbReference>
<dbReference type="InterPro" id="IPR019787">
    <property type="entry name" value="Znf_PHD-finger"/>
</dbReference>
<dbReference type="InterPro" id="IPR013083">
    <property type="entry name" value="Znf_RING/FYVE/PHD"/>
</dbReference>
<dbReference type="PANTHER" id="PTHR46453:SF3">
    <property type="entry name" value="MYND-TYPE ZINC FINGER-CONTAINING CHROMATIN READER ZMYND8"/>
    <property type="match status" value="1"/>
</dbReference>
<dbReference type="PANTHER" id="PTHR46453">
    <property type="entry name" value="PROTEIN KINASE C-BINDING PROTEIN 1"/>
    <property type="match status" value="1"/>
</dbReference>
<dbReference type="Pfam" id="PF00439">
    <property type="entry name" value="Bromodomain"/>
    <property type="match status" value="1"/>
</dbReference>
<dbReference type="Pfam" id="PF12064">
    <property type="entry name" value="DUF3544"/>
    <property type="match status" value="1"/>
</dbReference>
<dbReference type="Pfam" id="PF24324">
    <property type="entry name" value="MYND_ZMYND11_ZMYD8"/>
    <property type="match status" value="1"/>
</dbReference>
<dbReference type="Pfam" id="PF00628">
    <property type="entry name" value="PHD"/>
    <property type="match status" value="1"/>
</dbReference>
<dbReference type="Pfam" id="PF00855">
    <property type="entry name" value="PWWP"/>
    <property type="match status" value="1"/>
</dbReference>
<dbReference type="Pfam" id="PF23460">
    <property type="entry name" value="ZMYND8_CC"/>
    <property type="match status" value="1"/>
</dbReference>
<dbReference type="SMART" id="SM00297">
    <property type="entry name" value="BROMO"/>
    <property type="match status" value="1"/>
</dbReference>
<dbReference type="SMART" id="SM00249">
    <property type="entry name" value="PHD"/>
    <property type="match status" value="1"/>
</dbReference>
<dbReference type="SMART" id="SM00293">
    <property type="entry name" value="PWWP"/>
    <property type="match status" value="1"/>
</dbReference>
<dbReference type="SUPFAM" id="SSF47370">
    <property type="entry name" value="Bromodomain"/>
    <property type="match status" value="1"/>
</dbReference>
<dbReference type="SUPFAM" id="SSF57903">
    <property type="entry name" value="FYVE/PHD zinc finger"/>
    <property type="match status" value="1"/>
</dbReference>
<dbReference type="SUPFAM" id="SSF144232">
    <property type="entry name" value="HIT/MYND zinc finger-like"/>
    <property type="match status" value="1"/>
</dbReference>
<dbReference type="SUPFAM" id="SSF63748">
    <property type="entry name" value="Tudor/PWWP/MBT"/>
    <property type="match status" value="1"/>
</dbReference>
<dbReference type="PROSITE" id="PS50014">
    <property type="entry name" value="BROMODOMAIN_2"/>
    <property type="match status" value="1"/>
</dbReference>
<dbReference type="PROSITE" id="PS50812">
    <property type="entry name" value="PWWP"/>
    <property type="match status" value="1"/>
</dbReference>
<dbReference type="PROSITE" id="PS01360">
    <property type="entry name" value="ZF_MYND_1"/>
    <property type="match status" value="1"/>
</dbReference>
<dbReference type="PROSITE" id="PS50865">
    <property type="entry name" value="ZF_MYND_2"/>
    <property type="match status" value="1"/>
</dbReference>
<dbReference type="PROSITE" id="PS01359">
    <property type="entry name" value="ZF_PHD_1"/>
    <property type="match status" value="1"/>
</dbReference>
<dbReference type="PROSITE" id="PS50016">
    <property type="entry name" value="ZF_PHD_2"/>
    <property type="match status" value="1"/>
</dbReference>
<protein>
    <recommendedName>
        <fullName evidence="24">MYND-type zinc finger-containing chromatin reader ZMYND8</fullName>
    </recommendedName>
    <alternativeName>
        <fullName>Cutaneous T-cell lymphoma-associated antigen se14-3</fullName>
        <shortName>CTCL-associated antigen se14-3</shortName>
    </alternativeName>
    <alternativeName>
        <fullName>Protein kinase C-binding protein 1</fullName>
    </alternativeName>
    <alternativeName>
        <fullName>Rack7</fullName>
    </alternativeName>
    <alternativeName>
        <fullName evidence="25">Transcription coregulator ZMYND8</fullName>
    </alternativeName>
    <alternativeName>
        <fullName>Zinc finger MYND domain-containing protein 8</fullName>
    </alternativeName>
</protein>
<gene>
    <name type="primary">ZMYND8</name>
    <name type="synonym">KIAA1125</name>
    <name type="synonym">PRKCBP1</name>
    <name type="synonym">RACK7</name>
</gene>
<comment type="function">
    <text evidence="8 9 10 11 13 14 15 16 17">Chromatin reader that recognizes dual histone modifications such as histone H3.1 dimethylated at 'Lys-36' and histone H4 acetylated at 'Lys-16' (H3.1K36me2-H4K16ac) and histone H3 methylated at 'Lys-4' and histone H4 acetylated at 'Lys-14' (H3K4me1-H3K14ac) (PubMed:26655721, PubMed:27477906, PubMed:31965980, PubMed:36064715). May act as a transcriptional corepressor for KDM5D by recognizing the dual histone signature H3K4me1-H3K14ac (PubMed:27477906). May also act as a transcriptional corepressor for KDM5C and EZH2 (PubMed:33323928). Recognizes acetylated histone H4 and recruits the NuRD chromatin remodeling complex to damaged chromatin for transcriptional repression and double-strand break repair by homologous recombination (PubMed:25593309, PubMed:27732854, PubMed:30134174). Also activates transcription elongation by RNA polymerase II through recruiting the P-TEFb complex to target promoters (PubMed:26655721, PubMed:30134174). Localizes to H3.1K36me2-H4K16ac marks at all-trans-retinoic acid (ATRA)-responsive genes and positively regulates their expression (PubMed:26655721). Promotes neuronal differentiation by associating with regulatory regions within the MAPT gene, to enhance transcription of a protein-coding MAPT isoform and suppress the non-coding MAPT213 isoform (PubMed:30134174, PubMed:35916866, PubMed:36064715). Suppresses breast cancer, and prostate cancer cell invasion and metastasis (PubMed:27477906, PubMed:31965980, PubMed:33323928).</text>
</comment>
<comment type="subunit">
    <text evidence="6 8 10 11 12 13 14 15 16 17">Monomer and homodimer (PubMed:30134174). Interacts with NuRD subcomplexes containing GATAD2A (PubMed:27732854). Interacts with the histone deacetylase NuRD complex subunit CHD4; the interaction is direct, appears to occur with monomeric ZMYND8, and is increased following DNA damage (PubMed:25593309, PubMed:30134174, PubMed:36064715). Interacts (via N-terminus) with the P-TEFb complex subunit CCNT1 (via central region); the interaction is direct and the association appears to occur between homodimeric ZMYND8 and the activated form of the P-TEFb complex (PubMed:30134174). Interacts (via N-terminus) with DBN1 (via ADF-H domain); the interaction leads to sequestering of ZMYND8 in the cytoplasm (PubMed:28966017, PubMed:35916866). Interacts with the P-TEFb complex subunit CDK9; the association appears to occur between homodimeric ZMYND8 and the activated form of the P-TEFb complex (PubMed:30134174). Interacts with EZH2; the interaction is dependent on the presence of chromatin (PubMed:33323928, PubMed:36064715). Interacts (via MYND domain) with the NuRD complex subunit GATAD2A (PubMed:27732854, PubMed:35916866). Interacts with histone H3 (via N-terminus) that is both methylated at 'Lys-4' (H3K4me1) and acetylated at 'Lys-14' (H3K14ac), with histone H3 (via N-terminus) unmodified at 'Lys-4' (H3K4me0) and acetylated at 'Lys-14' (H3K14ac), and with histone H3 (via N-terminus) di-methylated at 'Lys-36' (H3K36me2) (PubMed:25593309, PubMed:26655721, PubMed:27477906, PubMed:31965980). Interacts (via Bromo domain) with histone H4 acetylated at 'Lys-16' (H4K16ac) (PubMed:25593309, PubMed:26655721, PubMed:31965980). Interacts with HDAC1 (PubMed:25593309, PubMed:36064715). Interacts with HDAC2 (PubMed:25593309). Interacts with KDM1A (PubMed:25593309, PubMed:27477906). Interacts with KDM5C (PubMed:33323928). Interacts with KDM5D (PubMed:27477906). Interacts in vitro with PRKCB (PubMed:11003709). Interacts with RNA polymerase II subunit POLR2A phosphorylated at 'Ser-5' (PubMed:26655721). Interacts with ZNF592 (PubMed:30134174). Interacts with ZNF687 (PubMed:30134174). Does not interact with GATAD2B (PubMed:27732854).</text>
</comment>
<comment type="interaction">
    <interactant intactId="EBI-765834">
        <id>Q9ULU4</id>
    </interactant>
    <interactant intactId="EBI-765407">
        <id>P41182</id>
        <label>BCL6</label>
    </interactant>
    <organismsDiffer>false</organismsDiffer>
    <experiments>3</experiments>
</comment>
<comment type="interaction">
    <interactant intactId="EBI-765834">
        <id>Q9ULU4</id>
    </interactant>
    <interactant intactId="EBI-351394">
        <id>Q16643</id>
        <label>DBN1</label>
    </interactant>
    <organismsDiffer>false</organismsDiffer>
    <experiments>4</experiments>
</comment>
<comment type="interaction">
    <interactant intactId="EBI-765834">
        <id>Q9ULU4</id>
    </interactant>
    <interactant intactId="EBI-1053596">
        <id>Q13627</id>
        <label>DYRK1A</label>
    </interactant>
    <organismsDiffer>false</organismsDiffer>
    <experiments>2</experiments>
</comment>
<comment type="interaction">
    <interactant intactId="EBI-12169985">
        <id>Q9ULU4-14</id>
    </interactant>
    <interactant intactId="EBI-16439278">
        <id>Q6FHY5</id>
        <label>MEOX2</label>
    </interactant>
    <organismsDiffer>false</organismsDiffer>
    <experiments>3</experiments>
</comment>
<comment type="subcellular location">
    <subcellularLocation>
        <location evidence="8 10 11 12">Nucleus</location>
    </subcellularLocation>
    <subcellularLocation>
        <location evidence="8 9 11 14 17">Chromosome</location>
    </subcellularLocation>
    <subcellularLocation>
        <location evidence="12">Cytoplasm</location>
    </subcellularLocation>
    <text evidence="8 11 12 17">Sequestered in the cytoplasm through the interaction with DBN1 (PubMed:28966017). Localizes to sites of DNA damage in a KAT5-dependent and DNA poly (ADP-ribose)-dependent manner (PubMed:25593309, PubMed:27732854). On chromatin, localizes to demethylated regions, active promoters, and transcription start sites (PubMed:27732854, PubMed:36064715).</text>
</comment>
<comment type="alternative products">
    <event type="alternative splicing"/>
    <isoform>
        <id>Q9ULU4-1</id>
        <name>1</name>
        <sequence type="displayed"/>
    </isoform>
    <isoform>
        <id>Q9ULU4-2</id>
        <name>2</name>
        <sequence type="described" ref="VSP_000566 VSP_000568"/>
    </isoform>
    <isoform>
        <id>Q9ULU4-3</id>
        <name>3</name>
        <sequence type="described" ref="VSP_000564 VSP_000568"/>
    </isoform>
    <isoform>
        <id>Q9ULU4-4</id>
        <name>4</name>
        <sequence type="described" ref="VSP_000565 VSP_000568"/>
    </isoform>
    <isoform>
        <id>Q9ULU4-5</id>
        <name>5</name>
        <sequence type="described" ref="VSP_000563 VSP_000567"/>
    </isoform>
    <isoform>
        <id>Q9ULU4-6</id>
        <name>6</name>
        <sequence type="described" ref="VSP_000564 VSP_000568 VSP_000570"/>
    </isoform>
    <isoform>
        <id>Q9ULU4-7</id>
        <name>7</name>
        <sequence type="described" ref="VSP_000563 VSP_000570"/>
    </isoform>
    <isoform>
        <id>Q9ULU4-8</id>
        <name>8</name>
        <sequence type="described" ref="VSP_000563 VSP_017096 VSP_000570"/>
    </isoform>
    <isoform>
        <id>Q9ULU4-9</id>
        <name>9</name>
        <sequence type="described" ref="VSP_000568 VSP_000570"/>
    </isoform>
    <isoform>
        <id>Q9ULU4-10</id>
        <name>10</name>
        <sequence type="described" ref="VSP_000563"/>
    </isoform>
    <isoform>
        <id>Q9ULU4-11</id>
        <name>11</name>
        <sequence type="described" ref="VSP_000570"/>
    </isoform>
    <isoform>
        <id>Q9ULU4-12</id>
        <name>12</name>
        <sequence type="described" ref="VSP_000563 VSP_000568"/>
    </isoform>
    <isoform>
        <id>Q9ULU4-13</id>
        <name>13</name>
        <sequence type="described" ref="VSP_000563 VSP_000568 VSP_000570"/>
    </isoform>
    <isoform>
        <id>Q9ULU4-14</id>
        <name>14</name>
        <sequence type="described" ref="VSP_000563 VSP_000567 VSP_000568"/>
    </isoform>
    <isoform>
        <id>Q9ULU4-15</id>
        <name>15</name>
        <sequence type="described" ref="VSP_000563 VSP_000567 VSP_053400 VSP_000568"/>
    </isoform>
    <isoform>
        <id>Q9ULU4-16</id>
        <name>16</name>
        <sequence type="described" ref="VSP_000563 VSP_000567 VSP_000568 VSP_000570"/>
    </isoform>
    <isoform>
        <id>Q9ULU4-17</id>
        <name>17</name>
        <sequence type="described" ref="VSP_000563 VSP_000567 VSP_017096"/>
    </isoform>
    <isoform>
        <id>Q9ULU4-18</id>
        <name>18</name>
        <sequence type="described" ref="VSP_000563 VSP_000567 VSP_053400"/>
    </isoform>
    <isoform>
        <id>Q9ULU4-19</id>
        <name>19</name>
        <sequence type="described" ref="VSP_054810 VSP_000570"/>
    </isoform>
    <isoform>
        <id>Q9ULU4-20</id>
        <name>20</name>
        <sequence type="described" ref="VSP_054811 VSP_000567"/>
    </isoform>
    <isoform>
        <id>Q9ULU4-21</id>
        <name>21</name>
        <sequence type="described" ref="VSP_000567 VSP_000568"/>
    </isoform>
    <isoform>
        <id>Q9ULU4-22</id>
        <name>22</name>
        <sequence type="described" ref="VSP_000563 VSP_000568 VSP_054814 VSP_000570"/>
    </isoform>
    <isoform>
        <id>Q9ULU4-23</id>
        <name>23</name>
        <sequence type="described" ref="VSP_000567 VSP_054812 VSP_000568 VSP_000570"/>
    </isoform>
</comment>
<comment type="tissue specificity">
    <text evidence="6 7 16 17">Expressed in neurons (at protein level) (PubMed:36064715). Absent in astrocytes (at protein level) (PubMed:36064715). Expressed in all tissues examined with highest expression in brain, lung, pancreas, and placenta (PubMed:11003709, PubMed:35916866). Expressed in cutaneous T-cell lymphomas (CTCL) (PubMed:11149944).</text>
</comment>
<comment type="developmental stage">
    <text evidence="16">Highly expressed in fetal brain, with decreasing expression in postnatal stages.</text>
</comment>
<comment type="induction">
    <text evidence="9">Induced by all-trans-retinoic acid (ATRA) (at protein level).</text>
</comment>
<comment type="domain">
    <text evidence="8 9 11">The bromo domain is required for interaction with histone H4K16ac.</text>
</comment>
<comment type="domain">
    <molecule>Isoform 1</molecule>
    <text evidence="8 11">The bromo domain is required for localization to DNA damage sites.</text>
</comment>
<comment type="domain">
    <molecule>Isoform 17</molecule>
    <text evidence="11">The MYND-type zinc finger domain is required for localization to DNA damage sites.</text>
</comment>
<comment type="domain">
    <text evidence="9">The PWWP domain is required for interaction with histone H3.1K36me2.</text>
</comment>
<comment type="disease">
    <text evidence="16">Mutations in ZMYND8 may be the cause of syndromic intellectual disability with variable cardiovascular, ophthalmologic and minor skeletal anomalies.</text>
</comment>
<comment type="sequence caution" evidence="28">
    <conflict type="frameshift">
        <sequence resource="EMBL-CDS" id="AAC72244"/>
    </conflict>
</comment>
<comment type="sequence caution" evidence="28">
    <conflict type="erroneous initiation">
        <sequence resource="EMBL-CDS" id="BAA86439"/>
    </conflict>
    <text>Extended N-terminus.</text>
</comment>